<evidence type="ECO:0000250" key="1"/>
<evidence type="ECO:0000250" key="2">
    <source>
        <dbReference type="UniProtKB" id="Q2MJT0"/>
    </source>
</evidence>
<evidence type="ECO:0000250" key="3">
    <source>
        <dbReference type="UniProtKB" id="Q60929"/>
    </source>
</evidence>
<evidence type="ECO:0000255" key="4"/>
<evidence type="ECO:0000255" key="5">
    <source>
        <dbReference type="PROSITE-ProRule" id="PRU00251"/>
    </source>
</evidence>
<evidence type="ECO:0000256" key="6">
    <source>
        <dbReference type="SAM" id="MobiDB-lite"/>
    </source>
</evidence>
<evidence type="ECO:0000269" key="7">
    <source>
    </source>
</evidence>
<evidence type="ECO:0000269" key="8">
    <source>
    </source>
</evidence>
<evidence type="ECO:0000269" key="9">
    <source>
    </source>
</evidence>
<evidence type="ECO:0000269" key="10">
    <source>
    </source>
</evidence>
<evidence type="ECO:0000269" key="11">
    <source>
    </source>
</evidence>
<evidence type="ECO:0000269" key="12">
    <source>
    </source>
</evidence>
<evidence type="ECO:0000269" key="13">
    <source>
    </source>
</evidence>
<evidence type="ECO:0000269" key="14">
    <source>
    </source>
</evidence>
<evidence type="ECO:0000269" key="15">
    <source>
    </source>
</evidence>
<evidence type="ECO:0000269" key="16">
    <source>
    </source>
</evidence>
<evidence type="ECO:0000269" key="17">
    <source>
    </source>
</evidence>
<evidence type="ECO:0000269" key="18">
    <source>
    </source>
</evidence>
<evidence type="ECO:0000269" key="19">
    <source>
    </source>
</evidence>
<evidence type="ECO:0000269" key="20">
    <source>
    </source>
</evidence>
<evidence type="ECO:0000269" key="21">
    <source>
    </source>
</evidence>
<evidence type="ECO:0000269" key="22">
    <source>
    </source>
</evidence>
<evidence type="ECO:0000269" key="23">
    <source>
    </source>
</evidence>
<evidence type="ECO:0000269" key="24">
    <source>
    </source>
</evidence>
<evidence type="ECO:0000269" key="25">
    <source>
    </source>
</evidence>
<evidence type="ECO:0000269" key="26">
    <source>
    </source>
</evidence>
<evidence type="ECO:0000269" key="27">
    <source>
    </source>
</evidence>
<evidence type="ECO:0000269" key="28">
    <source>
    </source>
</evidence>
<evidence type="ECO:0000269" key="29">
    <source>
    </source>
</evidence>
<evidence type="ECO:0000303" key="30">
    <source>
    </source>
</evidence>
<evidence type="ECO:0000303" key="31">
    <source>
    </source>
</evidence>
<evidence type="ECO:0000303" key="32">
    <source>
    </source>
</evidence>
<evidence type="ECO:0000303" key="33">
    <source>
    </source>
</evidence>
<evidence type="ECO:0000303" key="34">
    <source ref="2"/>
</evidence>
<evidence type="ECO:0000303" key="35">
    <source ref="6"/>
</evidence>
<evidence type="ECO:0000305" key="36"/>
<evidence type="ECO:0007744" key="37">
    <source>
    </source>
</evidence>
<evidence type="ECO:0007744" key="38">
    <source>
    </source>
</evidence>
<evidence type="ECO:0007744" key="39">
    <source>
    </source>
</evidence>
<evidence type="ECO:0007829" key="40">
    <source>
        <dbReference type="PDB" id="1C7U"/>
    </source>
</evidence>
<evidence type="ECO:0007829" key="41">
    <source>
        <dbReference type="PDB" id="1EGW"/>
    </source>
</evidence>
<evidence type="ECO:0007829" key="42">
    <source>
        <dbReference type="PDB" id="3KOV"/>
    </source>
</evidence>
<evidence type="ECO:0007829" key="43">
    <source>
        <dbReference type="PDB" id="3P57"/>
    </source>
</evidence>
<protein>
    <recommendedName>
        <fullName>Myocyte-specific enhancer factor 2A</fullName>
    </recommendedName>
    <alternativeName>
        <fullName>Serum response factor-like protein 1</fullName>
    </alternativeName>
</protein>
<sequence length="507" mass="54811">MGRKKIQITRIMDERNRQVTFTKRKFGLMKKAYELSVLCDCEIALIIFNSSNKLFQYASTDMDKVLLKYTEYNEPHESRTNSDIVEALNKKEHRGCDSPDPDTSYVLTPHTEEKYKKINEEFDNMMRNHKIAPGLPPQNFSMSVTVPVTSPNALSYTNPGSSLVSPSLAASSTLTDSSMLSPPQTTLHRNVSPGAPQRPPSTGNAGGMLSTTDLTVPNGAGSSPVGNGFVNSRASPNLIGATGANSLGKVMPTKSPPPPGGGNLGMNSRKPDLRVVIPPSSKGMMPPLSEEEELELNTQRISSSQATQPLATPVVSVTTPSLPPQGLVYSAMPTAYNTDYSLTSADLSALQGFNSPGMLSLGQVSAWQQHHLGQAALSSLVAGGQLSQGSNLSINTNQNISIKSEPISPPRDRMTPSGFQQQQQQQQQQQPPPPPQPQPQPPQPQPRQEMGRSPVDSLSSSSSSYDGSDREDPRGDFHSPIVLGRPPNTEDRESPSVKRMRMDAWVT</sequence>
<reference key="1">
    <citation type="journal article" date="1991" name="Genes Dev.">
        <title>Human SRF-related proteins: DNA-binding properties and potential regulatory targets.</title>
        <authorList>
            <person name="Pollock R."/>
            <person name="Treisman R."/>
        </authorList>
    </citation>
    <scope>NUCLEOTIDE SEQUENCE [MRNA] (ISOFORMS MEF2; RSRFC4 AND RSRFC9)</scope>
    <scope>DNA-BINDING</scope>
    <scope>TISSUE SPECIFICITY</scope>
    <scope>DIMERIZATION</scope>
    <source>
        <tissue>Placenta</tissue>
    </source>
</reference>
<reference key="2">
    <citation type="submission" date="1993-11" db="EMBL/GenBank/DDBJ databases">
        <authorList>
            <person name="Treisman R."/>
        </authorList>
    </citation>
    <scope>NUCLEOTIDE SEQUENCE [MRNA] (ISOFORM RSRFC9)</scope>
    <scope>SEQUENCE REVISION</scope>
</reference>
<reference key="3">
    <citation type="journal article" date="1992" name="Genes Dev.">
        <title>Human myocyte-specific enhancer factor 2 comprises a group of tissue-restricted MADS box transcription factors.</title>
        <authorList>
            <person name="Yu Y.-T."/>
            <person name="Breitbart R.E."/>
            <person name="Smoot L.B."/>
            <person name="Lee Y."/>
            <person name="Mahdavi V."/>
            <person name="Nadal-Ginard B."/>
        </authorList>
    </citation>
    <scope>NUCLEOTIDE SEQUENCE [MRNA] (ISOFORMS MEF2 AND RSRFC9)</scope>
    <scope>TISSUE SPECIFICITY</scope>
    <source>
        <tissue>Heart</tissue>
        <tissue>Skeletal muscle</tissue>
    </source>
</reference>
<reference key="4">
    <citation type="submission" date="1996-02" db="EMBL/GenBank/DDBJ databases">
        <authorList>
            <person name="Suzuki E."/>
            <person name="Lowry J."/>
            <person name="Sonoda G."/>
            <person name="Testa J.R."/>
            <person name="Walsh K."/>
        </authorList>
    </citation>
    <scope>NUCLEOTIDE SEQUENCE [GENOMIC DNA] (ISOFORMS RSRFC4 AND RSRFC9)</scope>
</reference>
<reference key="5">
    <citation type="journal article" date="2004" name="Nat. Genet.">
        <title>Complete sequencing and characterization of 21,243 full-length human cDNAs.</title>
        <authorList>
            <person name="Ota T."/>
            <person name="Suzuki Y."/>
            <person name="Nishikawa T."/>
            <person name="Otsuki T."/>
            <person name="Sugiyama T."/>
            <person name="Irie R."/>
            <person name="Wakamatsu A."/>
            <person name="Hayashi K."/>
            <person name="Sato H."/>
            <person name="Nagai K."/>
            <person name="Kimura K."/>
            <person name="Makita H."/>
            <person name="Sekine M."/>
            <person name="Obayashi M."/>
            <person name="Nishi T."/>
            <person name="Shibahara T."/>
            <person name="Tanaka T."/>
            <person name="Ishii S."/>
            <person name="Yamamoto J."/>
            <person name="Saito K."/>
            <person name="Kawai Y."/>
            <person name="Isono Y."/>
            <person name="Nakamura Y."/>
            <person name="Nagahari K."/>
            <person name="Murakami K."/>
            <person name="Yasuda T."/>
            <person name="Iwayanagi T."/>
            <person name="Wagatsuma M."/>
            <person name="Shiratori A."/>
            <person name="Sudo H."/>
            <person name="Hosoiri T."/>
            <person name="Kaku Y."/>
            <person name="Kodaira H."/>
            <person name="Kondo H."/>
            <person name="Sugawara M."/>
            <person name="Takahashi M."/>
            <person name="Kanda K."/>
            <person name="Yokoi T."/>
            <person name="Furuya T."/>
            <person name="Kikkawa E."/>
            <person name="Omura Y."/>
            <person name="Abe K."/>
            <person name="Kamihara K."/>
            <person name="Katsuta N."/>
            <person name="Sato K."/>
            <person name="Tanikawa M."/>
            <person name="Yamazaki M."/>
            <person name="Ninomiya K."/>
            <person name="Ishibashi T."/>
            <person name="Yamashita H."/>
            <person name="Murakawa K."/>
            <person name="Fujimori K."/>
            <person name="Tanai H."/>
            <person name="Kimata M."/>
            <person name="Watanabe M."/>
            <person name="Hiraoka S."/>
            <person name="Chiba Y."/>
            <person name="Ishida S."/>
            <person name="Ono Y."/>
            <person name="Takiguchi S."/>
            <person name="Watanabe S."/>
            <person name="Yosida M."/>
            <person name="Hotuta T."/>
            <person name="Kusano J."/>
            <person name="Kanehori K."/>
            <person name="Takahashi-Fujii A."/>
            <person name="Hara H."/>
            <person name="Tanase T.-O."/>
            <person name="Nomura Y."/>
            <person name="Togiya S."/>
            <person name="Komai F."/>
            <person name="Hara R."/>
            <person name="Takeuchi K."/>
            <person name="Arita M."/>
            <person name="Imose N."/>
            <person name="Musashino K."/>
            <person name="Yuuki H."/>
            <person name="Oshima A."/>
            <person name="Sasaki N."/>
            <person name="Aotsuka S."/>
            <person name="Yoshikawa Y."/>
            <person name="Matsunawa H."/>
            <person name="Ichihara T."/>
            <person name="Shiohata N."/>
            <person name="Sano S."/>
            <person name="Moriya S."/>
            <person name="Momiyama H."/>
            <person name="Satoh N."/>
            <person name="Takami S."/>
            <person name="Terashima Y."/>
            <person name="Suzuki O."/>
            <person name="Nakagawa S."/>
            <person name="Senoh A."/>
            <person name="Mizoguchi H."/>
            <person name="Goto Y."/>
            <person name="Shimizu F."/>
            <person name="Wakebe H."/>
            <person name="Hishigaki H."/>
            <person name="Watanabe T."/>
            <person name="Sugiyama A."/>
            <person name="Takemoto M."/>
            <person name="Kawakami B."/>
            <person name="Yamazaki M."/>
            <person name="Watanabe K."/>
            <person name="Kumagai A."/>
            <person name="Itakura S."/>
            <person name="Fukuzumi Y."/>
            <person name="Fujimori Y."/>
            <person name="Komiyama M."/>
            <person name="Tashiro H."/>
            <person name="Tanigami A."/>
            <person name="Fujiwara T."/>
            <person name="Ono T."/>
            <person name="Yamada K."/>
            <person name="Fujii Y."/>
            <person name="Ozaki K."/>
            <person name="Hirao M."/>
            <person name="Ohmori Y."/>
            <person name="Kawabata A."/>
            <person name="Hikiji T."/>
            <person name="Kobatake N."/>
            <person name="Inagaki H."/>
            <person name="Ikema Y."/>
            <person name="Okamoto S."/>
            <person name="Okitani R."/>
            <person name="Kawakami T."/>
            <person name="Noguchi S."/>
            <person name="Itoh T."/>
            <person name="Shigeta K."/>
            <person name="Senba T."/>
            <person name="Matsumura K."/>
            <person name="Nakajima Y."/>
            <person name="Mizuno T."/>
            <person name="Morinaga M."/>
            <person name="Sasaki M."/>
            <person name="Togashi T."/>
            <person name="Oyama M."/>
            <person name="Hata H."/>
            <person name="Watanabe M."/>
            <person name="Komatsu T."/>
            <person name="Mizushima-Sugano J."/>
            <person name="Satoh T."/>
            <person name="Shirai Y."/>
            <person name="Takahashi Y."/>
            <person name="Nakagawa K."/>
            <person name="Okumura K."/>
            <person name="Nagase T."/>
            <person name="Nomura N."/>
            <person name="Kikuchi H."/>
            <person name="Masuho Y."/>
            <person name="Yamashita R."/>
            <person name="Nakai K."/>
            <person name="Yada T."/>
            <person name="Nakamura Y."/>
            <person name="Ohara O."/>
            <person name="Isogai T."/>
            <person name="Sugano S."/>
        </authorList>
    </citation>
    <scope>NUCLEOTIDE SEQUENCE [LARGE SCALE MRNA] (ISOFORM 7)</scope>
    <source>
        <tissue>Amygdala</tissue>
    </source>
</reference>
<reference key="6">
    <citation type="submission" date="2005-03" db="EMBL/GenBank/DDBJ databases">
        <authorList>
            <person name="Totoki Y."/>
            <person name="Toyoda A."/>
            <person name="Takeda T."/>
            <person name="Sakaki Y."/>
            <person name="Tanaka A."/>
            <person name="Yokoyama S."/>
            <person name="Ohara O."/>
            <person name="Nagase T."/>
            <person name="Kikuno F.R."/>
        </authorList>
    </citation>
    <scope>NUCLEOTIDE SEQUENCE [LARGE SCALE MRNA] (ISOFORM 6)</scope>
    <source>
        <tissue>Brain</tissue>
    </source>
</reference>
<reference key="7">
    <citation type="journal article" date="2006" name="Nature">
        <title>Analysis of the DNA sequence and duplication history of human chromosome 15.</title>
        <authorList>
            <person name="Zody M.C."/>
            <person name="Garber M."/>
            <person name="Sharpe T."/>
            <person name="Young S.K."/>
            <person name="Rowen L."/>
            <person name="O'Neill K."/>
            <person name="Whittaker C.A."/>
            <person name="Kamal M."/>
            <person name="Chang J.L."/>
            <person name="Cuomo C.A."/>
            <person name="Dewar K."/>
            <person name="FitzGerald M.G."/>
            <person name="Kodira C.D."/>
            <person name="Madan A."/>
            <person name="Qin S."/>
            <person name="Yang X."/>
            <person name="Abbasi N."/>
            <person name="Abouelleil A."/>
            <person name="Arachchi H.M."/>
            <person name="Baradarani L."/>
            <person name="Birditt B."/>
            <person name="Bloom S."/>
            <person name="Bloom T."/>
            <person name="Borowsky M.L."/>
            <person name="Burke J."/>
            <person name="Butler J."/>
            <person name="Cook A."/>
            <person name="DeArellano K."/>
            <person name="DeCaprio D."/>
            <person name="Dorris L. III"/>
            <person name="Dors M."/>
            <person name="Eichler E.E."/>
            <person name="Engels R."/>
            <person name="Fahey J."/>
            <person name="Fleetwood P."/>
            <person name="Friedman C."/>
            <person name="Gearin G."/>
            <person name="Hall J.L."/>
            <person name="Hensley G."/>
            <person name="Johnson E."/>
            <person name="Jones C."/>
            <person name="Kamat A."/>
            <person name="Kaur A."/>
            <person name="Locke D.P."/>
            <person name="Madan A."/>
            <person name="Munson G."/>
            <person name="Jaffe D.B."/>
            <person name="Lui A."/>
            <person name="Macdonald P."/>
            <person name="Mauceli E."/>
            <person name="Naylor J.W."/>
            <person name="Nesbitt R."/>
            <person name="Nicol R."/>
            <person name="O'Leary S.B."/>
            <person name="Ratcliffe A."/>
            <person name="Rounsley S."/>
            <person name="She X."/>
            <person name="Sneddon K.M.B."/>
            <person name="Stewart S."/>
            <person name="Sougnez C."/>
            <person name="Stone S.M."/>
            <person name="Topham K."/>
            <person name="Vincent D."/>
            <person name="Wang S."/>
            <person name="Zimmer A.R."/>
            <person name="Birren B.W."/>
            <person name="Hood L."/>
            <person name="Lander E.S."/>
            <person name="Nusbaum C."/>
        </authorList>
    </citation>
    <scope>NUCLEOTIDE SEQUENCE [LARGE SCALE GENOMIC DNA]</scope>
</reference>
<reference key="8">
    <citation type="journal article" date="2004" name="Genome Res.">
        <title>The status, quality, and expansion of the NIH full-length cDNA project: the Mammalian Gene Collection (MGC).</title>
        <authorList>
            <consortium name="The MGC Project Team"/>
        </authorList>
    </citation>
    <scope>NUCLEOTIDE SEQUENCE [LARGE SCALE MRNA] (ISOFORMS 5 AND 8)</scope>
    <source>
        <tissue>Pancreas</tissue>
        <tissue>Uterus</tissue>
    </source>
</reference>
<reference key="9">
    <citation type="journal article" date="1998" name="Nucleic Acids Res.">
        <title>Interaction of myocyte enhancer factor 2 (MEF2) with a mitogen-activated protein kinase, ERK5/BMK1.</title>
        <authorList>
            <person name="Yang C.-C."/>
            <person name="Ornatsky O.I."/>
            <person name="McDermott J.C."/>
            <person name="Cruz T.F."/>
            <person name="Prody C.A."/>
        </authorList>
    </citation>
    <scope>INTERACTION WITH MAPK7</scope>
    <scope>PHOSPHORYLATION</scope>
</reference>
<reference key="10">
    <citation type="journal article" date="1999" name="EMBO J.">
        <title>HDAC4 deacetylase associates with and represses the MEF2 transcription factor.</title>
        <authorList>
            <person name="Miska E.A."/>
            <person name="Karlsson C."/>
            <person name="Langley E."/>
            <person name="Nielsen S.J."/>
            <person name="Pines J."/>
            <person name="Kouzarides T."/>
        </authorList>
    </citation>
    <scope>INTERACTION WITH HDAC4 AND HDAC9</scope>
</reference>
<reference key="11">
    <citation type="journal article" date="1999" name="Mol. Cell. Biol.">
        <title>Regulation of the MEF2 family of transcription factors by p38.</title>
        <authorList>
            <person name="Zhao M."/>
            <person name="New L."/>
            <person name="Kravchenko V.V."/>
            <person name="Kato Y."/>
            <person name="Gram H."/>
            <person name="di Padova F."/>
            <person name="Olson E.N."/>
            <person name="Ulevitch R.J."/>
            <person name="Han J.-D."/>
        </authorList>
    </citation>
    <scope>PHOSPHORYLATION AT THR-312; THR-319 AND SER-453</scope>
    <scope>FUNCTION</scope>
    <scope>HETERODIMERIZATION</scope>
    <scope>MUTAGENESIS OF THR-312; THR-319; SER-355; SER-453 AND SER-479</scope>
</reference>
<reference key="12">
    <citation type="journal article" date="1999" name="Mol. Cell. Biol.">
        <title>Targeting of p38 mitogen-activated protein kinases to MEF2 transcription factors.</title>
        <authorList>
            <person name="Yang S.-H."/>
            <person name="Galanis A."/>
            <person name="Sharrocks A.D."/>
        </authorList>
    </citation>
    <scope>INTERACTION WITH MAPK14</scope>
    <scope>PHOSPHORYLATION AT THR-312 AND THR-319</scope>
    <scope>MUTAGENESIS OF ARG-269; LYS-270; LEU-273; VAL-275; ILE-277 AND PRO-278</scope>
</reference>
<reference key="13">
    <citation type="journal article" date="2000" name="J. Biol. Chem.">
        <title>Big mitogen-activated kinase regulates multiple members of the MEF2 protein family.</title>
        <authorList>
            <person name="Kato Y."/>
            <person name="Zhao M."/>
            <person name="Morikawa A."/>
            <person name="Sugiyama T."/>
            <person name="Chakravortty D."/>
            <person name="Koide N."/>
            <person name="Yoshida T."/>
            <person name="Tapping R.I."/>
            <person name="Yang Y."/>
            <person name="Yokochi T."/>
            <person name="Lee J.D."/>
        </authorList>
    </citation>
    <scope>PHOSPHORYLATION AT THR-312; THR-319 AND SER-355</scope>
    <scope>MUTAGENESIS OF THR-312; THR-319 AND SER-355</scope>
</reference>
<reference key="14">
    <citation type="journal article" date="2002" name="Proc. Natl. Acad. Sci. U.S.A.">
        <title>Dominant-interfering forms of MEF2 generated by caspase cleavage contribute to NMDA-induced neuronal apoptosis.</title>
        <authorList>
            <person name="Okamoto S."/>
            <person name="Li Z."/>
            <person name="Ju C."/>
            <person name="Scholzke M.N."/>
            <person name="Mathews E."/>
            <person name="Cui J."/>
            <person name="Salvesen G.S."/>
            <person name="Bossy-Wetzel E."/>
            <person name="Lipton S.A."/>
        </authorList>
    </citation>
    <scope>PROTEOLYTIC PROCESSING AT ASP-176; ASP-213 AND ASP-466</scope>
    <scope>FUNCTION</scope>
    <scope>MUTAGENESIS OF ASP-176 AND ASP-213</scope>
</reference>
<reference key="15">
    <citation type="journal article" date="2003" name="J. Biol. Chem.">
        <title>Phosphorylation motifs regulating the stability and function of myocyte enhancer factor 2A.</title>
        <authorList>
            <person name="Cox D.M."/>
            <person name="Du M."/>
            <person name="Marback M."/>
            <person name="Yang E.C.C."/>
            <person name="Chan J."/>
            <person name="Siu K.W.M."/>
            <person name="McDermott J.C."/>
        </authorList>
    </citation>
    <scope>PHOSPHORYLATION AT SER-255; THR-312; THR-319 AND SER-408</scope>
    <scope>IDENTIFICATION BY MASS SPECTROMETRY</scope>
    <scope>MUTAGENESIS OF SER-255</scope>
</reference>
<reference key="16">
    <citation type="journal article" date="2003" name="Neuron">
        <title>Cdk5-mediated inhibition of the protective effects of transcription factor MEF2 in neurotoxicity-induced apoptosis.</title>
        <authorList>
            <person name="Gong X."/>
            <person name="Tang X."/>
            <person name="Wiedmann M."/>
            <person name="Wang X."/>
            <person name="Peng J."/>
            <person name="Zheng D."/>
            <person name="Blair L.A.C."/>
            <person name="Marshall J."/>
            <person name="Mao Z."/>
        </authorList>
    </citation>
    <scope>PHOSPHORYLATION AT SER-408</scope>
    <scope>FUNCTION</scope>
    <scope>SUBCELLULAR LOCATION</scope>
    <scope>MUTAGENESIS OF SER-408</scope>
</reference>
<reference key="17">
    <citation type="journal article" date="2003" name="Proc. Natl. Acad. Sci. U.S.A.">
        <title>Regulation of the human GLUT4 gene promoter: interaction between a transcriptional activator and myocyte enhancer factor 2A.</title>
        <authorList>
            <person name="Knight J.B."/>
            <person name="Eyster C.A."/>
            <person name="Griesel B.A."/>
            <person name="Olson A.L."/>
        </authorList>
    </citation>
    <scope>INTERACTION WITH SLC2A4RG</scope>
</reference>
<reference key="18">
    <citation type="journal article" date="2005" name="J. Biol. Chem.">
        <title>Alternative pre-mRNA splicing governs expression of a conserved acidic transactivation domain in myocyte enhancer factor 2 factors of striated muscle and brain.</title>
        <authorList>
            <person name="Zhu B."/>
            <person name="Ramachandran B."/>
            <person name="Gulick T."/>
        </authorList>
    </citation>
    <scope>FUNCTION OF BETA DOMAIN</scope>
</reference>
<reference key="19">
    <citation type="journal article" date="2005" name="J. Neurosci.">
        <title>Cyclin-dependent kinase 5 mediates neurotoxin-induced degradation of the transcription factor myocyte enhancer factor 2.</title>
        <authorList>
            <person name="Tang X."/>
            <person name="Wang X."/>
            <person name="Gong X."/>
            <person name="Tong M."/>
            <person name="Park D."/>
            <person name="Xia Z."/>
            <person name="Mao Z."/>
        </authorList>
    </citation>
    <scope>PROTEOLYTIC PROCESSING</scope>
    <scope>PHOSPHORYLATION</scope>
</reference>
<reference key="20">
    <citation type="journal article" date="2006" name="J. Cell. Mol. Med.">
        <title>SUMO-1 modification of MEF2A regulates its transcriptional activity.</title>
        <authorList>
            <person name="Riquelme C."/>
            <person name="Barthel K.K."/>
            <person name="Liu X."/>
        </authorList>
    </citation>
    <scope>SUMOYLATION AT LYS-403</scope>
    <scope>INTERACTION WITH PIAS1</scope>
    <scope>FUNCTION</scope>
    <scope>SUBCELLULAR LOCATION</scope>
    <scope>MUTAGENESIS OF LYS-403</scope>
</reference>
<reference key="21">
    <citation type="journal article" date="2006" name="Proc. Natl. Acad. Sci. U.S.A.">
        <title>PDSM, a motif for phosphorylation-dependent SUMO modification.</title>
        <authorList>
            <person name="Hietakangas V."/>
            <person name="Anckar J."/>
            <person name="Blomster H.A."/>
            <person name="Fujimoto M."/>
            <person name="Palvimo J.J."/>
            <person name="Nakai A."/>
            <person name="Sistonen L."/>
        </authorList>
    </citation>
    <scope>SUMOYLATION AT LYS-403</scope>
    <scope>PHOSPHORYLATION AT SER-408</scope>
    <scope>FUNCTION</scope>
    <scope>MUTAGENESIS OF LYS-403 AND SER-408</scope>
</reference>
<reference key="22">
    <citation type="journal article" date="2006" name="Science">
        <title>A calcium-regulated MEF2 sumoylation switch controls postsynaptic differentiation.</title>
        <authorList>
            <person name="Shalizi A."/>
            <person name="Gaudilliere B."/>
            <person name="Yuan Z."/>
            <person name="Stegmueller J."/>
            <person name="Shirogane T."/>
            <person name="Ge Q."/>
            <person name="Tan Y."/>
            <person name="Schulman B."/>
            <person name="Harper J.W."/>
            <person name="Bonni A."/>
        </authorList>
    </citation>
    <scope>PHOSPHORYLATION AT SER-408</scope>
    <scope>FUNCTION</scope>
</reference>
<reference key="23">
    <citation type="journal article" date="2007" name="Mol. Cell. Biol.">
        <title>Nemo-like kinase-myocyte enhancer factor 2A signaling regulates anterior formation in Xenopus development.</title>
        <authorList>
            <person name="Satoh K."/>
            <person name="Ohnishi J."/>
            <person name="Sato A."/>
            <person name="Takeyama M."/>
            <person name="Iemura S."/>
            <person name="Natsume T."/>
            <person name="Shibuya H."/>
        </authorList>
    </citation>
    <scope>PHOSPHORYLATION AT THR-312 BY NLK</scope>
</reference>
<reference key="24">
    <citation type="journal article" date="2008" name="Circulation">
        <title>Quantitative control of adaptive cardiac hypertrophy by acetyltransferase p300.</title>
        <authorList>
            <person name="Wei J.Q."/>
            <person name="Shehadeh L.A."/>
            <person name="Mitrani J.M."/>
            <person name="Pessanha M."/>
            <person name="Slepak T.I."/>
            <person name="Webster K.A."/>
            <person name="Bishopric N.H."/>
        </authorList>
    </citation>
    <scope>ACETYLATION</scope>
    <scope>INVOLVEMENT IN CARDIAC HYPERTROPHY</scope>
</reference>
<reference key="25">
    <citation type="journal article" date="2008" name="Proc. Natl. Acad. Sci. U.S.A.">
        <title>A quantitative atlas of mitotic phosphorylation.</title>
        <authorList>
            <person name="Dephoure N."/>
            <person name="Zhou C."/>
            <person name="Villen J."/>
            <person name="Beausoleil S.A."/>
            <person name="Bakalarski C.E."/>
            <person name="Elledge S.J."/>
            <person name="Gygi S.P."/>
        </authorList>
    </citation>
    <scope>PHOSPHORYLATION [LARGE SCALE ANALYSIS] AT SER-98; SER-235 AND SER-255</scope>
    <scope>PHOSPHORYLATION [LARGE SCALE ANALYSIS] AT SER-98 (ISOFORMS 6; MEFA AND RSRFC9)</scope>
    <scope>PHOSPHORYLATION [LARGE SCALE ANALYSIS] AT SER-30 (ISOFORMS 7 AND 8)</scope>
    <scope>IDENTIFICATION BY MASS SPECTROMETRY [LARGE SCALE ANALYSIS]</scope>
    <source>
        <tissue>Cervix carcinoma</tissue>
    </source>
</reference>
<reference key="26">
    <citation type="journal article" date="2009" name="Science">
        <title>Lysine acetylation targets protein complexes and co-regulates major cellular functions.</title>
        <authorList>
            <person name="Choudhary C."/>
            <person name="Kumar C."/>
            <person name="Gnad F."/>
            <person name="Nielsen M.L."/>
            <person name="Rehman M."/>
            <person name="Walther T.C."/>
            <person name="Olsen J.V."/>
            <person name="Mann M."/>
        </authorList>
    </citation>
    <scope>ACETYLATION [LARGE SCALE ANALYSIS] AT LYS-249</scope>
    <scope>IDENTIFICATION BY MASS SPECTROMETRY [LARGE SCALE ANALYSIS]</scope>
</reference>
<reference key="27">
    <citation type="journal article" date="2011" name="BMC Syst. Biol.">
        <title>Initial characterization of the human central proteome.</title>
        <authorList>
            <person name="Burkard T.R."/>
            <person name="Planyavsky M."/>
            <person name="Kaupe I."/>
            <person name="Breitwieser F.P."/>
            <person name="Buerckstuemmer T."/>
            <person name="Bennett K.L."/>
            <person name="Superti-Furga G."/>
            <person name="Colinge J."/>
        </authorList>
    </citation>
    <scope>IDENTIFICATION BY MASS SPECTROMETRY [LARGE SCALE ANALYSIS]</scope>
</reference>
<reference key="28">
    <citation type="journal article" date="2011" name="Mol. Med. Report.">
        <title>Identification of HZF1 as a novel target gene of the MEF2 transcription factor.</title>
        <authorList>
            <person name="Liu X."/>
            <person name="Jin E.Z."/>
            <person name="Zhi J.X."/>
            <person name="Li X.Q."/>
        </authorList>
    </citation>
    <scope>FUNCTION</scope>
    <scope>CHROMATIN BINDING</scope>
</reference>
<reference key="29">
    <citation type="journal article" date="2013" name="J. Proteome Res.">
        <title>Toward a comprehensive characterization of a human cancer cell phosphoproteome.</title>
        <authorList>
            <person name="Zhou H."/>
            <person name="Di Palma S."/>
            <person name="Preisinger C."/>
            <person name="Peng M."/>
            <person name="Polat A.N."/>
            <person name="Heck A.J."/>
            <person name="Mohammed S."/>
        </authorList>
    </citation>
    <scope>PHOSPHORYLATION [LARGE SCALE ANALYSIS] AT SER-98 AND SER-255</scope>
    <scope>IDENTIFICATION BY MASS SPECTROMETRY [LARGE SCALE ANALYSIS]</scope>
    <source>
        <tissue>Cervix carcinoma</tissue>
        <tissue>Erythroleukemia</tissue>
    </source>
</reference>
<reference key="30">
    <citation type="journal article" date="2004" name="Hum. Mol. Genet.">
        <title>Transcription factor MEF2A mutations in patients with coronary artery disease.</title>
        <authorList>
            <person name="Bhagavatula M.R.K."/>
            <person name="Fan C."/>
            <person name="Shen G.-Q."/>
            <person name="Cassano J."/>
            <person name="Plow E.F."/>
            <person name="Topol E.J."/>
            <person name="Wang Q."/>
        </authorList>
    </citation>
    <scope>VARIANTS SER-263; LEU-279 AND ASP-283</scope>
    <scope>CHARACTERIZATION OF VARIANTS SER-263; LEU-279 AND ASP-283</scope>
</reference>
<reference key="31">
    <citation type="journal article" date="2006" name="J. Med. Genet.">
        <title>The Pro279Leu variant in the transcription factor MEF2A is associated with myocardial infarction.</title>
        <authorList>
            <person name="Gonzalez P."/>
            <person name="Garcia-Castro M."/>
            <person name="Reguero J.R."/>
            <person name="Batalla A."/>
            <person name="Ordonez A.G."/>
            <person name="Palop R.L."/>
            <person name="Lozano I."/>
            <person name="Montes M."/>
            <person name="Alvarez V."/>
            <person name="Coto E."/>
        </authorList>
    </citation>
    <scope>VARIANT LEU-279</scope>
    <scope>ASSOCIATION WITH SUSCEPTIBILITY TO MYOCARDIAL INFARCTION</scope>
</reference>
<reference key="32">
    <citation type="journal article" date="2008" name="Circulation">
        <title>Lack of association between the MEF2A gene and myocardial infarction.</title>
        <authorList>
            <person name="Lieb W."/>
            <person name="Mayer B."/>
            <person name="Koenig I.R."/>
            <person name="Borwitzky I."/>
            <person name="Goetz A."/>
            <person name="Kain S."/>
            <person name="Hengstenberg C."/>
            <person name="Linsel-Nitschke P."/>
            <person name="Fischer M."/>
            <person name="Doering A."/>
            <person name="Wichmann H.E."/>
            <person name="Meitinger T."/>
            <person name="Kreutz R."/>
            <person name="Ziegler A."/>
            <person name="Schunkert H."/>
            <person name="Erdmann J."/>
        </authorList>
    </citation>
    <scope>VARIANT LEU-279</scope>
    <scope>LACK OF ASSOCIATION WITH MYOCARDIAL INFARCTION</scope>
</reference>
<reference key="33">
    <citation type="journal article" date="2000" name="EMBO J.">
        <title>Solution structure of the MEF2A-DNA complex: structural basis for the modulation of DNA bending and specificity by MADS-box transcription factors.</title>
        <authorList>
            <person name="Huang K."/>
            <person name="Louis J.M."/>
            <person name="Donaldson L."/>
            <person name="Lim F.L."/>
            <person name="Sharrocks A.D."/>
            <person name="Clore G.M."/>
        </authorList>
    </citation>
    <scope>STRUCTURE BY NMR OF 2-86 IN COMPLEX WITH DNA</scope>
</reference>
<reference key="34">
    <citation type="journal article" date="2000" name="J. Mol. Biol.">
        <title>Crystal structure of MEF2A core bound to DNA at 1.5 A resolution.</title>
        <authorList>
            <person name="Santelli E."/>
            <person name="Richmond T.J."/>
        </authorList>
    </citation>
    <scope>X-RAY CRYSTALLOGRAPHY (1.5 ANGSTROMS) OF 2-78 IN COMPLEX WITH DNA</scope>
    <scope>DIMERIZATION</scope>
</reference>
<organism>
    <name type="scientific">Homo sapiens</name>
    <name type="common">Human</name>
    <dbReference type="NCBI Taxonomy" id="9606"/>
    <lineage>
        <taxon>Eukaryota</taxon>
        <taxon>Metazoa</taxon>
        <taxon>Chordata</taxon>
        <taxon>Craniata</taxon>
        <taxon>Vertebrata</taxon>
        <taxon>Euteleostomi</taxon>
        <taxon>Mammalia</taxon>
        <taxon>Eutheria</taxon>
        <taxon>Euarchontoglires</taxon>
        <taxon>Primates</taxon>
        <taxon>Haplorrhini</taxon>
        <taxon>Catarrhini</taxon>
        <taxon>Hominidae</taxon>
        <taxon>Homo</taxon>
    </lineage>
</organism>
<gene>
    <name type="primary">MEF2A</name>
    <name type="synonym">MEF2</name>
</gene>
<proteinExistence type="evidence at protein level"/>
<keyword id="KW-0002">3D-structure</keyword>
<keyword id="KW-0007">Acetylation</keyword>
<keyword id="KW-0010">Activator</keyword>
<keyword id="KW-0025">Alternative splicing</keyword>
<keyword id="KW-0053">Apoptosis</keyword>
<keyword id="KW-0217">Developmental protein</keyword>
<keyword id="KW-0221">Differentiation</keyword>
<keyword id="KW-0225">Disease variant</keyword>
<keyword id="KW-0238">DNA-binding</keyword>
<keyword id="KW-1017">Isopeptide bond</keyword>
<keyword id="KW-0524">Neurogenesis</keyword>
<keyword id="KW-0539">Nucleus</keyword>
<keyword id="KW-0597">Phosphoprotein</keyword>
<keyword id="KW-1267">Proteomics identification</keyword>
<keyword id="KW-1185">Reference proteome</keyword>
<keyword id="KW-0804">Transcription</keyword>
<keyword id="KW-0805">Transcription regulation</keyword>
<keyword id="KW-0832">Ubl conjugation</keyword>
<dbReference type="EMBL" id="Y16312">
    <property type="protein sequence ID" value="CAA76175.1"/>
    <property type="molecule type" value="mRNA"/>
</dbReference>
<dbReference type="EMBL" id="X63381">
    <property type="protein sequence ID" value="CAA44979.1"/>
    <property type="molecule type" value="mRNA"/>
</dbReference>
<dbReference type="EMBL" id="X68503">
    <property type="protein sequence ID" value="CAA48516.1"/>
    <property type="molecule type" value="mRNA"/>
</dbReference>
<dbReference type="EMBL" id="X68505">
    <property type="protein sequence ID" value="CAA48517.1"/>
    <property type="molecule type" value="mRNA"/>
</dbReference>
<dbReference type="EMBL" id="U49020">
    <property type="protein sequence ID" value="AAB17195.1"/>
    <property type="molecule type" value="Genomic_DNA"/>
</dbReference>
<dbReference type="EMBL" id="U44889">
    <property type="protein sequence ID" value="AAB17195.1"/>
    <property type="status" value="JOINED"/>
    <property type="molecule type" value="Genomic_DNA"/>
</dbReference>
<dbReference type="EMBL" id="U49012">
    <property type="protein sequence ID" value="AAB17195.1"/>
    <property type="status" value="JOINED"/>
    <property type="molecule type" value="Genomic_DNA"/>
</dbReference>
<dbReference type="EMBL" id="U49013">
    <property type="protein sequence ID" value="AAB17195.1"/>
    <property type="status" value="JOINED"/>
    <property type="molecule type" value="Genomic_DNA"/>
</dbReference>
<dbReference type="EMBL" id="U49015">
    <property type="protein sequence ID" value="AAB17195.1"/>
    <property type="status" value="JOINED"/>
    <property type="molecule type" value="Genomic_DNA"/>
</dbReference>
<dbReference type="EMBL" id="U49016">
    <property type="protein sequence ID" value="AAB17195.1"/>
    <property type="status" value="JOINED"/>
    <property type="molecule type" value="Genomic_DNA"/>
</dbReference>
<dbReference type="EMBL" id="U49017">
    <property type="protein sequence ID" value="AAB17195.1"/>
    <property type="status" value="JOINED"/>
    <property type="molecule type" value="Genomic_DNA"/>
</dbReference>
<dbReference type="EMBL" id="U49018">
    <property type="protein sequence ID" value="AAB17195.1"/>
    <property type="status" value="JOINED"/>
    <property type="molecule type" value="Genomic_DNA"/>
</dbReference>
<dbReference type="EMBL" id="U49019">
    <property type="protein sequence ID" value="AAB17195.1"/>
    <property type="status" value="JOINED"/>
    <property type="molecule type" value="Genomic_DNA"/>
</dbReference>
<dbReference type="EMBL" id="U49020">
    <property type="protein sequence ID" value="AAB17196.1"/>
    <property type="molecule type" value="Genomic_DNA"/>
</dbReference>
<dbReference type="EMBL" id="U44889">
    <property type="protein sequence ID" value="AAB17196.1"/>
    <property type="status" value="JOINED"/>
    <property type="molecule type" value="Genomic_DNA"/>
</dbReference>
<dbReference type="EMBL" id="U49012">
    <property type="protein sequence ID" value="AAB17196.1"/>
    <property type="status" value="JOINED"/>
    <property type="molecule type" value="Genomic_DNA"/>
</dbReference>
<dbReference type="EMBL" id="U49013">
    <property type="protein sequence ID" value="AAB17196.1"/>
    <property type="status" value="JOINED"/>
    <property type="molecule type" value="Genomic_DNA"/>
</dbReference>
<dbReference type="EMBL" id="U49015">
    <property type="protein sequence ID" value="AAB17196.1"/>
    <property type="status" value="JOINED"/>
    <property type="molecule type" value="Genomic_DNA"/>
</dbReference>
<dbReference type="EMBL" id="U49016">
    <property type="protein sequence ID" value="AAB17196.1"/>
    <property type="status" value="JOINED"/>
    <property type="molecule type" value="Genomic_DNA"/>
</dbReference>
<dbReference type="EMBL" id="U49017">
    <property type="protein sequence ID" value="AAB17196.1"/>
    <property type="status" value="JOINED"/>
    <property type="molecule type" value="Genomic_DNA"/>
</dbReference>
<dbReference type="EMBL" id="U49018">
    <property type="protein sequence ID" value="AAB17196.1"/>
    <property type="status" value="JOINED"/>
    <property type="molecule type" value="Genomic_DNA"/>
</dbReference>
<dbReference type="EMBL" id="U49019">
    <property type="protein sequence ID" value="AAB17196.1"/>
    <property type="status" value="JOINED"/>
    <property type="molecule type" value="Genomic_DNA"/>
</dbReference>
<dbReference type="EMBL" id="AK294207">
    <property type="protein sequence ID" value="BAG57518.1"/>
    <property type="molecule type" value="mRNA"/>
</dbReference>
<dbReference type="EMBL" id="AB208985">
    <property type="protein sequence ID" value="BAD92222.1"/>
    <property type="status" value="ALT_INIT"/>
    <property type="molecule type" value="mRNA"/>
</dbReference>
<dbReference type="EMBL" id="AC015660">
    <property type="status" value="NOT_ANNOTATED_CDS"/>
    <property type="molecule type" value="Genomic_DNA"/>
</dbReference>
<dbReference type="EMBL" id="AC022692">
    <property type="status" value="NOT_ANNOTATED_CDS"/>
    <property type="molecule type" value="Genomic_DNA"/>
</dbReference>
<dbReference type="EMBL" id="AC103967">
    <property type="status" value="NOT_ANNOTATED_CDS"/>
    <property type="molecule type" value="Genomic_DNA"/>
</dbReference>
<dbReference type="EMBL" id="BC013437">
    <property type="protein sequence ID" value="AAH13437.1"/>
    <property type="molecule type" value="mRNA"/>
</dbReference>
<dbReference type="EMBL" id="BC053871">
    <property type="protein sequence ID" value="AAH53871.1"/>
    <property type="status" value="ALT_INIT"/>
    <property type="molecule type" value="mRNA"/>
</dbReference>
<dbReference type="CCDS" id="CCDS45362.1">
    <molecule id="Q02078-5"/>
</dbReference>
<dbReference type="CCDS" id="CCDS45363.1">
    <molecule id="Q02078-7"/>
</dbReference>
<dbReference type="CCDS" id="CCDS53978.1">
    <molecule id="Q02078-6"/>
</dbReference>
<dbReference type="CCDS" id="CCDS58401.1">
    <molecule id="Q02078-8"/>
</dbReference>
<dbReference type="CCDS" id="CCDS81920.1">
    <molecule id="Q02078-2"/>
</dbReference>
<dbReference type="CCDS" id="CCDS92067.1">
    <molecule id="Q02078-1"/>
</dbReference>
<dbReference type="PIR" id="C39481">
    <property type="entry name" value="C39481"/>
</dbReference>
<dbReference type="PIR" id="S25831">
    <property type="entry name" value="S25831"/>
</dbReference>
<dbReference type="RefSeq" id="NP_001124398.1">
    <molecule id="Q02078-6"/>
    <property type="nucleotide sequence ID" value="NM_001130926.5"/>
</dbReference>
<dbReference type="RefSeq" id="NP_001124399.1">
    <molecule id="Q02078-7"/>
    <property type="nucleotide sequence ID" value="NM_001130927.5"/>
</dbReference>
<dbReference type="RefSeq" id="NP_001124400.1">
    <molecule id="Q02078-8"/>
    <property type="nucleotide sequence ID" value="NM_001130928.4"/>
</dbReference>
<dbReference type="RefSeq" id="NP_001165365.1">
    <molecule id="Q02078-6"/>
    <property type="nucleotide sequence ID" value="NM_001171894.5"/>
</dbReference>
<dbReference type="RefSeq" id="NP_001306135.1">
    <molecule id="Q02078-2"/>
    <property type="nucleotide sequence ID" value="NM_001319206.4"/>
</dbReference>
<dbReference type="RefSeq" id="NP_001339543.1">
    <molecule id="Q02078-6"/>
    <property type="nucleotide sequence ID" value="NM_001352614.4"/>
</dbReference>
<dbReference type="RefSeq" id="NP_001339544.1">
    <molecule id="Q02078-6"/>
    <property type="nucleotide sequence ID" value="NM_001352615.4"/>
</dbReference>
<dbReference type="RefSeq" id="NP_001339545.1">
    <molecule id="Q02078-2"/>
    <property type="nucleotide sequence ID" value="NM_001352616.4"/>
</dbReference>
<dbReference type="RefSeq" id="NP_001339546.1">
    <molecule id="Q02078-5"/>
    <property type="nucleotide sequence ID" value="NM_001352617.4"/>
</dbReference>
<dbReference type="RefSeq" id="NP_001352132.1">
    <molecule id="Q02078-1"/>
    <property type="nucleotide sequence ID" value="NM_001365203.3"/>
</dbReference>
<dbReference type="RefSeq" id="NP_001352133.1">
    <molecule id="Q02078-1"/>
    <property type="nucleotide sequence ID" value="NM_001365204.3"/>
</dbReference>
<dbReference type="RefSeq" id="NP_001352134.1">
    <molecule id="Q02078-2"/>
    <property type="nucleotide sequence ID" value="NM_001365205.3"/>
</dbReference>
<dbReference type="RefSeq" id="NP_001352136.1">
    <molecule id="Q02078-5"/>
    <property type="nucleotide sequence ID" value="NM_001365207.3"/>
</dbReference>
<dbReference type="RefSeq" id="NP_001352137.1">
    <molecule id="Q02078-6"/>
    <property type="nucleotide sequence ID" value="NM_001365208.3"/>
</dbReference>
<dbReference type="RefSeq" id="NP_001352138.1">
    <molecule id="Q02078-7"/>
    <property type="nucleotide sequence ID" value="NM_001365209.3"/>
</dbReference>
<dbReference type="RefSeq" id="NP_001380488.1">
    <molecule id="Q02078-8"/>
    <property type="nucleotide sequence ID" value="NM_001393559.2"/>
</dbReference>
<dbReference type="RefSeq" id="NP_001386958.1">
    <molecule id="Q02078-1"/>
    <property type="nucleotide sequence ID" value="NM_001400029.1"/>
</dbReference>
<dbReference type="RefSeq" id="NP_001386959.1">
    <molecule id="Q02078-1"/>
    <property type="nucleotide sequence ID" value="NM_001400030.1"/>
</dbReference>
<dbReference type="RefSeq" id="NP_001386960.1">
    <molecule id="Q02078-2"/>
    <property type="nucleotide sequence ID" value="NM_001400031.1"/>
</dbReference>
<dbReference type="RefSeq" id="NP_001386961.1">
    <molecule id="Q02078-2"/>
    <property type="nucleotide sequence ID" value="NM_001400032.1"/>
</dbReference>
<dbReference type="RefSeq" id="NP_001386962.1">
    <molecule id="Q02078-2"/>
    <property type="nucleotide sequence ID" value="NM_001400033.1"/>
</dbReference>
<dbReference type="RefSeq" id="NP_001386963.1">
    <molecule id="Q02078-2"/>
    <property type="nucleotide sequence ID" value="NM_001400034.1"/>
</dbReference>
<dbReference type="RefSeq" id="NP_001386964.1">
    <molecule id="Q02078-2"/>
    <property type="nucleotide sequence ID" value="NM_001400035.1"/>
</dbReference>
<dbReference type="RefSeq" id="NP_001386965.1">
    <molecule id="Q02078-2"/>
    <property type="nucleotide sequence ID" value="NM_001400036.1"/>
</dbReference>
<dbReference type="RefSeq" id="NP_001386967.1">
    <molecule id="Q02078-5"/>
    <property type="nucleotide sequence ID" value="NM_001400038.1"/>
</dbReference>
<dbReference type="RefSeq" id="NP_001386968.1">
    <molecule id="Q02078-5"/>
    <property type="nucleotide sequence ID" value="NM_001400039.1"/>
</dbReference>
<dbReference type="RefSeq" id="NP_001386969.1">
    <molecule id="Q02078-5"/>
    <property type="nucleotide sequence ID" value="NM_001400040.1"/>
</dbReference>
<dbReference type="RefSeq" id="NP_001386978.1">
    <molecule id="Q02078-5"/>
    <property type="nucleotide sequence ID" value="NM_001400049.1"/>
</dbReference>
<dbReference type="RefSeq" id="NP_001386979.1">
    <molecule id="Q02078-5"/>
    <property type="nucleotide sequence ID" value="NM_001400050.1"/>
</dbReference>
<dbReference type="RefSeq" id="NP_001386980.1">
    <molecule id="Q02078-5"/>
    <property type="nucleotide sequence ID" value="NM_001400051.1"/>
</dbReference>
<dbReference type="RefSeq" id="NP_001386981.1">
    <molecule id="Q02078-5"/>
    <property type="nucleotide sequence ID" value="NM_001400052.1"/>
</dbReference>
<dbReference type="RefSeq" id="NP_001386982.1">
    <molecule id="Q02078-5"/>
    <property type="nucleotide sequence ID" value="NM_001400053.1"/>
</dbReference>
<dbReference type="RefSeq" id="NP_001386983.1">
    <molecule id="Q02078-6"/>
    <property type="nucleotide sequence ID" value="NM_001400054.1"/>
</dbReference>
<dbReference type="RefSeq" id="NP_001386984.1">
    <molecule id="Q02078-6"/>
    <property type="nucleotide sequence ID" value="NM_001400055.1"/>
</dbReference>
<dbReference type="RefSeq" id="NP_001386985.1">
    <molecule id="Q02078-6"/>
    <property type="nucleotide sequence ID" value="NM_001400056.1"/>
</dbReference>
<dbReference type="RefSeq" id="NP_001386986.1">
    <molecule id="Q02078-6"/>
    <property type="nucleotide sequence ID" value="NM_001400057.1"/>
</dbReference>
<dbReference type="RefSeq" id="NP_001386987.1">
    <molecule id="Q02078-6"/>
    <property type="nucleotide sequence ID" value="NM_001400058.1"/>
</dbReference>
<dbReference type="RefSeq" id="NP_001386988.1">
    <molecule id="Q02078-6"/>
    <property type="nucleotide sequence ID" value="NM_001400059.1"/>
</dbReference>
<dbReference type="RefSeq" id="NP_001386989.1">
    <molecule id="Q02078-6"/>
    <property type="nucleotide sequence ID" value="NM_001400060.1"/>
</dbReference>
<dbReference type="RefSeq" id="NP_001386990.1">
    <molecule id="Q02078-6"/>
    <property type="nucleotide sequence ID" value="NM_001400061.1"/>
</dbReference>
<dbReference type="RefSeq" id="NP_001386991.1">
    <molecule id="Q02078-6"/>
    <property type="nucleotide sequence ID" value="NM_001400062.1"/>
</dbReference>
<dbReference type="RefSeq" id="NP_001386992.1">
    <molecule id="Q02078-6"/>
    <property type="nucleotide sequence ID" value="NM_001400063.1"/>
</dbReference>
<dbReference type="RefSeq" id="NP_001386993.1">
    <molecule id="Q02078-6"/>
    <property type="nucleotide sequence ID" value="NM_001400064.1"/>
</dbReference>
<dbReference type="RefSeq" id="NP_001386994.1">
    <molecule id="Q02078-6"/>
    <property type="nucleotide sequence ID" value="NM_001400065.1"/>
</dbReference>
<dbReference type="RefSeq" id="NP_001386995.1">
    <molecule id="Q02078-6"/>
    <property type="nucleotide sequence ID" value="NM_001400066.1"/>
</dbReference>
<dbReference type="RefSeq" id="NP_005578.2">
    <molecule id="Q02078-5"/>
    <property type="nucleotide sequence ID" value="NM_005587.6"/>
</dbReference>
<dbReference type="RefSeq" id="XP_011519883.1">
    <property type="nucleotide sequence ID" value="XM_011521581.2"/>
</dbReference>
<dbReference type="RefSeq" id="XP_011519884.1">
    <molecule id="Q02078-1"/>
    <property type="nucleotide sequence ID" value="XM_011521582.3"/>
</dbReference>
<dbReference type="RefSeq" id="XP_011519888.1">
    <property type="nucleotide sequence ID" value="XM_011521586.2"/>
</dbReference>
<dbReference type="RefSeq" id="XP_016877679.1">
    <property type="nucleotide sequence ID" value="XM_017022190.1"/>
</dbReference>
<dbReference type="RefSeq" id="XP_016877680.1">
    <property type="nucleotide sequence ID" value="XM_017022191.1"/>
</dbReference>
<dbReference type="RefSeq" id="XP_016877682.1">
    <property type="nucleotide sequence ID" value="XM_017022193.1"/>
</dbReference>
<dbReference type="RefSeq" id="XP_016877683.1">
    <property type="nucleotide sequence ID" value="XM_017022194.1"/>
</dbReference>
<dbReference type="RefSeq" id="XP_047288477.1">
    <molecule id="Q02078-1"/>
    <property type="nucleotide sequence ID" value="XM_047432521.1"/>
</dbReference>
<dbReference type="RefSeq" id="XP_047288478.1">
    <molecule id="Q02078-2"/>
    <property type="nucleotide sequence ID" value="XM_047432522.1"/>
</dbReference>
<dbReference type="RefSeq" id="XP_047288480.1">
    <molecule id="Q02078-5"/>
    <property type="nucleotide sequence ID" value="XM_047432524.1"/>
</dbReference>
<dbReference type="RefSeq" id="XP_047288481.1">
    <molecule id="Q02078-6"/>
    <property type="nucleotide sequence ID" value="XM_047432525.1"/>
</dbReference>
<dbReference type="RefSeq" id="XP_047288482.1">
    <molecule id="Q02078-1"/>
    <property type="nucleotide sequence ID" value="XM_047432526.1"/>
</dbReference>
<dbReference type="RefSeq" id="XP_047288484.1">
    <molecule id="Q02078-5"/>
    <property type="nucleotide sequence ID" value="XM_047432528.1"/>
</dbReference>
<dbReference type="RefSeq" id="XP_047288485.1">
    <molecule id="Q02078-5"/>
    <property type="nucleotide sequence ID" value="XM_047432529.1"/>
</dbReference>
<dbReference type="RefSeq" id="XP_047288486.1">
    <molecule id="Q02078-6"/>
    <property type="nucleotide sequence ID" value="XM_047432530.1"/>
</dbReference>
<dbReference type="RefSeq" id="XP_047288487.1">
    <molecule id="Q02078-6"/>
    <property type="nucleotide sequence ID" value="XM_047432531.1"/>
</dbReference>
<dbReference type="RefSeq" id="XP_054233916.1">
    <molecule id="Q02078-1"/>
    <property type="nucleotide sequence ID" value="XM_054377941.1"/>
</dbReference>
<dbReference type="RefSeq" id="XP_054233917.1">
    <molecule id="Q02078-1"/>
    <property type="nucleotide sequence ID" value="XM_054377942.1"/>
</dbReference>
<dbReference type="RefSeq" id="XP_054233918.1">
    <molecule id="Q02078-2"/>
    <property type="nucleotide sequence ID" value="XM_054377943.1"/>
</dbReference>
<dbReference type="RefSeq" id="XP_054233920.1">
    <molecule id="Q02078-5"/>
    <property type="nucleotide sequence ID" value="XM_054377945.1"/>
</dbReference>
<dbReference type="RefSeq" id="XP_054233921.1">
    <molecule id="Q02078-6"/>
    <property type="nucleotide sequence ID" value="XM_054377946.1"/>
</dbReference>
<dbReference type="RefSeq" id="XP_054233922.1">
    <molecule id="Q02078-1"/>
    <property type="nucleotide sequence ID" value="XM_054377947.1"/>
</dbReference>
<dbReference type="RefSeq" id="XP_054233924.1">
    <molecule id="Q02078-5"/>
    <property type="nucleotide sequence ID" value="XM_054377949.1"/>
</dbReference>
<dbReference type="RefSeq" id="XP_054233925.1">
    <molecule id="Q02078-5"/>
    <property type="nucleotide sequence ID" value="XM_054377950.1"/>
</dbReference>
<dbReference type="RefSeq" id="XP_054233926.1">
    <molecule id="Q02078-6"/>
    <property type="nucleotide sequence ID" value="XM_054377951.1"/>
</dbReference>
<dbReference type="RefSeq" id="XP_054233927.1">
    <molecule id="Q02078-6"/>
    <property type="nucleotide sequence ID" value="XM_054377952.1"/>
</dbReference>
<dbReference type="PDB" id="1C7U">
    <property type="method" value="NMR"/>
    <property type="chains" value="A/B=2-86"/>
</dbReference>
<dbReference type="PDB" id="1EGW">
    <property type="method" value="X-ray"/>
    <property type="resolution" value="1.50 A"/>
    <property type="chains" value="A/B/C/D=2-78"/>
</dbReference>
<dbReference type="PDB" id="1LEW">
    <property type="method" value="X-ray"/>
    <property type="resolution" value="2.30 A"/>
    <property type="chains" value="B=269-280"/>
</dbReference>
<dbReference type="PDB" id="3KOV">
    <property type="method" value="X-ray"/>
    <property type="resolution" value="2.90 A"/>
    <property type="chains" value="A/B/I/J=2-91"/>
</dbReference>
<dbReference type="PDB" id="3MU6">
    <property type="method" value="X-ray"/>
    <property type="resolution" value="2.43 A"/>
    <property type="chains" value="A/B/C/D=2-70"/>
</dbReference>
<dbReference type="PDB" id="3P57">
    <property type="method" value="X-ray"/>
    <property type="resolution" value="2.19 A"/>
    <property type="chains" value="A/B/C/D/I/J=2-91"/>
</dbReference>
<dbReference type="PDB" id="6BYY">
    <property type="method" value="X-ray"/>
    <property type="resolution" value="2.30 A"/>
    <property type="chains" value="A/B/C/D=1-64, A/B/C/D=92-95"/>
</dbReference>
<dbReference type="PDB" id="6BZ1">
    <property type="method" value="X-ray"/>
    <property type="resolution" value="2.97 A"/>
    <property type="chains" value="A/B/C/D=1-64, A/B/C/D=92-95"/>
</dbReference>
<dbReference type="PDB" id="7XUZ">
    <property type="method" value="X-ray"/>
    <property type="resolution" value="3.59 A"/>
    <property type="chains" value="C/D/G/H=1-95"/>
</dbReference>
<dbReference type="PDBsum" id="1C7U"/>
<dbReference type="PDBsum" id="1EGW"/>
<dbReference type="PDBsum" id="1LEW"/>
<dbReference type="PDBsum" id="3KOV"/>
<dbReference type="PDBsum" id="3MU6"/>
<dbReference type="PDBsum" id="3P57"/>
<dbReference type="PDBsum" id="6BYY"/>
<dbReference type="PDBsum" id="6BZ1"/>
<dbReference type="PDBsum" id="7XUZ"/>
<dbReference type="SMR" id="Q02078"/>
<dbReference type="BioGRID" id="110369">
    <property type="interactions" value="70"/>
</dbReference>
<dbReference type="CORUM" id="Q02078"/>
<dbReference type="DIP" id="DIP-40711N"/>
<dbReference type="FunCoup" id="Q02078">
    <property type="interactions" value="2989"/>
</dbReference>
<dbReference type="IntAct" id="Q02078">
    <property type="interactions" value="51"/>
</dbReference>
<dbReference type="MINT" id="Q02078"/>
<dbReference type="STRING" id="9606.ENSP00000453095"/>
<dbReference type="GlyCosmos" id="Q02078">
    <property type="glycosylation" value="2 sites, 1 glycan"/>
</dbReference>
<dbReference type="GlyGen" id="Q02078">
    <property type="glycosylation" value="3 sites, 1 N-linked glycan (1 site), 1 O-linked glycan (2 sites)"/>
</dbReference>
<dbReference type="iPTMnet" id="Q02078"/>
<dbReference type="PhosphoSitePlus" id="Q02078"/>
<dbReference type="BioMuta" id="MEF2A"/>
<dbReference type="jPOST" id="Q02078"/>
<dbReference type="MassIVE" id="Q02078"/>
<dbReference type="PaxDb" id="9606-ENSP00000346389"/>
<dbReference type="PeptideAtlas" id="Q02078"/>
<dbReference type="ProteomicsDB" id="28155"/>
<dbReference type="ProteomicsDB" id="58035">
    <molecule id="Q02078-1"/>
</dbReference>
<dbReference type="ProteomicsDB" id="58036">
    <molecule id="Q02078-2"/>
</dbReference>
<dbReference type="ProteomicsDB" id="58037">
    <molecule id="Q02078-3"/>
</dbReference>
<dbReference type="ProteomicsDB" id="58038">
    <molecule id="Q02078-4"/>
</dbReference>
<dbReference type="ProteomicsDB" id="58039">
    <molecule id="Q02078-5"/>
</dbReference>
<dbReference type="ProteomicsDB" id="58040">
    <molecule id="Q02078-6"/>
</dbReference>
<dbReference type="ProteomicsDB" id="58041">
    <molecule id="Q02078-7"/>
</dbReference>
<dbReference type="Pumba" id="Q02078"/>
<dbReference type="Antibodypedia" id="3854">
    <property type="antibodies" value="1049 antibodies from 44 providers"/>
</dbReference>
<dbReference type="DNASU" id="4205"/>
<dbReference type="Ensembl" id="ENST00000354410.9">
    <molecule id="Q02078-5"/>
    <property type="protein sequence ID" value="ENSP00000346389.5"/>
    <property type="gene ID" value="ENSG00000068305.19"/>
</dbReference>
<dbReference type="Ensembl" id="ENST00000449277.6">
    <molecule id="Q02078-8"/>
    <property type="protein sequence ID" value="ENSP00000399460.2"/>
    <property type="gene ID" value="ENSG00000068305.19"/>
</dbReference>
<dbReference type="Ensembl" id="ENST00000557785.5">
    <molecule id="Q02078-6"/>
    <property type="protein sequence ID" value="ENSP00000453441.1"/>
    <property type="gene ID" value="ENSG00000068305.19"/>
</dbReference>
<dbReference type="Ensembl" id="ENST00000557942.6">
    <molecule id="Q02078-2"/>
    <property type="protein sequence ID" value="ENSP00000453095.1"/>
    <property type="gene ID" value="ENSG00000068305.19"/>
</dbReference>
<dbReference type="Ensembl" id="ENST00000558812.5">
    <molecule id="Q02078-7"/>
    <property type="protein sequence ID" value="ENSP00000454120.1"/>
    <property type="gene ID" value="ENSG00000068305.19"/>
</dbReference>
<dbReference type="Ensembl" id="ENST00000686611.1">
    <molecule id="Q02078-1"/>
    <property type="protein sequence ID" value="ENSP00000509137.1"/>
    <property type="gene ID" value="ENSG00000068305.19"/>
</dbReference>
<dbReference type="Ensembl" id="ENST00000691492.1">
    <molecule id="Q02078-6"/>
    <property type="protein sequence ID" value="ENSP00000509537.1"/>
    <property type="gene ID" value="ENSG00000068305.19"/>
</dbReference>
<dbReference type="GeneID" id="4205"/>
<dbReference type="KEGG" id="hsa:4205"/>
<dbReference type="MANE-Select" id="ENST00000557942.6">
    <molecule id="Q02078-2"/>
    <property type="protein sequence ID" value="ENSP00000453095.1"/>
    <property type="RefSeq nucleotide sequence ID" value="NM_001319206.4"/>
    <property type="RefSeq protein sequence ID" value="NP_001306135.1"/>
</dbReference>
<dbReference type="UCSC" id="uc002bve.4">
    <molecule id="Q02078-1"/>
    <property type="organism name" value="human"/>
</dbReference>
<dbReference type="AGR" id="HGNC:6993"/>
<dbReference type="CTD" id="4205"/>
<dbReference type="DisGeNET" id="4205"/>
<dbReference type="GeneCards" id="MEF2A"/>
<dbReference type="HGNC" id="HGNC:6993">
    <property type="gene designation" value="MEF2A"/>
</dbReference>
<dbReference type="HPA" id="ENSG00000068305">
    <property type="expression patterns" value="Low tissue specificity"/>
</dbReference>
<dbReference type="MalaCards" id="MEF2A"/>
<dbReference type="MIM" id="600660">
    <property type="type" value="gene"/>
</dbReference>
<dbReference type="MIM" id="608320">
    <property type="type" value="phenotype"/>
</dbReference>
<dbReference type="neXtProt" id="NX_Q02078"/>
<dbReference type="OpenTargets" id="ENSG00000068305"/>
<dbReference type="PharmGKB" id="PA30731"/>
<dbReference type="VEuPathDB" id="HostDB:ENSG00000068305"/>
<dbReference type="eggNOG" id="KOG0014">
    <property type="taxonomic scope" value="Eukaryota"/>
</dbReference>
<dbReference type="GeneTree" id="ENSGT00940000156205"/>
<dbReference type="HOGENOM" id="CLU_022902_4_0_1"/>
<dbReference type="InParanoid" id="Q02078"/>
<dbReference type="OMA" id="MNTQRIS"/>
<dbReference type="OrthoDB" id="1898716at2759"/>
<dbReference type="PAN-GO" id="Q02078">
    <property type="GO annotations" value="6 GO annotations based on evolutionary models"/>
</dbReference>
<dbReference type="PhylomeDB" id="Q02078"/>
<dbReference type="TreeFam" id="TF314067"/>
<dbReference type="PathwayCommons" id="Q02078"/>
<dbReference type="Reactome" id="R-HSA-198753">
    <property type="pathway name" value="ERK/MAPK targets"/>
</dbReference>
<dbReference type="Reactome" id="R-HSA-525793">
    <property type="pathway name" value="Myogenesis"/>
</dbReference>
<dbReference type="SignaLink" id="Q02078"/>
<dbReference type="SIGNOR" id="Q02078"/>
<dbReference type="BioGRID-ORCS" id="4205">
    <property type="hits" value="10 hits in 1182 CRISPR screens"/>
</dbReference>
<dbReference type="ChiTaRS" id="MEF2A">
    <property type="organism name" value="human"/>
</dbReference>
<dbReference type="EvolutionaryTrace" id="Q02078"/>
<dbReference type="GeneWiki" id="Myocyte-specific_enhancer_factor_2A"/>
<dbReference type="GenomeRNAi" id="4205"/>
<dbReference type="Pharos" id="Q02078">
    <property type="development level" value="Tbio"/>
</dbReference>
<dbReference type="PRO" id="PR:Q02078"/>
<dbReference type="Proteomes" id="UP000005640">
    <property type="component" value="Chromosome 15"/>
</dbReference>
<dbReference type="RNAct" id="Q02078">
    <property type="molecule type" value="protein"/>
</dbReference>
<dbReference type="Bgee" id="ENSG00000068305">
    <property type="expression patterns" value="Expressed in calcaneal tendon and 205 other cell types or tissues"/>
</dbReference>
<dbReference type="ExpressionAtlas" id="Q02078">
    <property type="expression patterns" value="baseline and differential"/>
</dbReference>
<dbReference type="GO" id="GO:0000785">
    <property type="term" value="C:chromatin"/>
    <property type="evidence" value="ECO:0000250"/>
    <property type="project" value="BHF-UCL"/>
</dbReference>
<dbReference type="GO" id="GO:0005829">
    <property type="term" value="C:cytosol"/>
    <property type="evidence" value="ECO:0000314"/>
    <property type="project" value="HPA"/>
</dbReference>
<dbReference type="GO" id="GO:0005654">
    <property type="term" value="C:nucleoplasm"/>
    <property type="evidence" value="ECO:0000314"/>
    <property type="project" value="HPA"/>
</dbReference>
<dbReference type="GO" id="GO:0005634">
    <property type="term" value="C:nucleus"/>
    <property type="evidence" value="ECO:0000314"/>
    <property type="project" value="UniProtKB"/>
</dbReference>
<dbReference type="GO" id="GO:0005667">
    <property type="term" value="C:transcription regulator complex"/>
    <property type="evidence" value="ECO:0000314"/>
    <property type="project" value="BHF-UCL"/>
</dbReference>
<dbReference type="GO" id="GO:0003682">
    <property type="term" value="F:chromatin binding"/>
    <property type="evidence" value="ECO:0000314"/>
    <property type="project" value="UniProtKB"/>
</dbReference>
<dbReference type="GO" id="GO:0001228">
    <property type="term" value="F:DNA-binding transcription activator activity, RNA polymerase II-specific"/>
    <property type="evidence" value="ECO:0000314"/>
    <property type="project" value="BHF-UCL"/>
</dbReference>
<dbReference type="GO" id="GO:0003700">
    <property type="term" value="F:DNA-binding transcription factor activity"/>
    <property type="evidence" value="ECO:0000314"/>
    <property type="project" value="BHF-UCL"/>
</dbReference>
<dbReference type="GO" id="GO:0000981">
    <property type="term" value="F:DNA-binding transcription factor activity, RNA polymerase II-specific"/>
    <property type="evidence" value="ECO:0000314"/>
    <property type="project" value="UniProtKB"/>
</dbReference>
<dbReference type="GO" id="GO:0140297">
    <property type="term" value="F:DNA-binding transcription factor binding"/>
    <property type="evidence" value="ECO:0000353"/>
    <property type="project" value="UniProtKB"/>
</dbReference>
<dbReference type="GO" id="GO:0035035">
    <property type="term" value="F:histone acetyltransferase binding"/>
    <property type="evidence" value="ECO:0000353"/>
    <property type="project" value="UniProtKB"/>
</dbReference>
<dbReference type="GO" id="GO:0042826">
    <property type="term" value="F:histone deacetylase binding"/>
    <property type="evidence" value="ECO:0000353"/>
    <property type="project" value="UniProtKB"/>
</dbReference>
<dbReference type="GO" id="GO:0046982">
    <property type="term" value="F:protein heterodimerization activity"/>
    <property type="evidence" value="ECO:0000353"/>
    <property type="project" value="UniProtKB"/>
</dbReference>
<dbReference type="GO" id="GO:0019901">
    <property type="term" value="F:protein kinase binding"/>
    <property type="evidence" value="ECO:0007669"/>
    <property type="project" value="Ensembl"/>
</dbReference>
<dbReference type="GO" id="GO:0000978">
    <property type="term" value="F:RNA polymerase II cis-regulatory region sequence-specific DNA binding"/>
    <property type="evidence" value="ECO:0000314"/>
    <property type="project" value="NTNU_SB"/>
</dbReference>
<dbReference type="GO" id="GO:0000977">
    <property type="term" value="F:RNA polymerase II transcription regulatory region sequence-specific DNA binding"/>
    <property type="evidence" value="ECO:0000314"/>
    <property type="project" value="UniProtKB"/>
</dbReference>
<dbReference type="GO" id="GO:0061629">
    <property type="term" value="F:RNA polymerase II-specific DNA-binding transcription factor binding"/>
    <property type="evidence" value="ECO:0000353"/>
    <property type="project" value="BHF-UCL"/>
</dbReference>
<dbReference type="GO" id="GO:0043565">
    <property type="term" value="F:sequence-specific DNA binding"/>
    <property type="evidence" value="ECO:0000314"/>
    <property type="project" value="UniProtKB"/>
</dbReference>
<dbReference type="GO" id="GO:0046332">
    <property type="term" value="F:SMAD binding"/>
    <property type="evidence" value="ECO:0000353"/>
    <property type="project" value="UniProtKB"/>
</dbReference>
<dbReference type="GO" id="GO:0006915">
    <property type="term" value="P:apoptotic process"/>
    <property type="evidence" value="ECO:0007669"/>
    <property type="project" value="UniProtKB-KW"/>
</dbReference>
<dbReference type="GO" id="GO:0061337">
    <property type="term" value="P:cardiac conduction"/>
    <property type="evidence" value="ECO:0000250"/>
    <property type="project" value="UniProtKB"/>
</dbReference>
<dbReference type="GO" id="GO:0030154">
    <property type="term" value="P:cell differentiation"/>
    <property type="evidence" value="ECO:0000318"/>
    <property type="project" value="GO_Central"/>
</dbReference>
<dbReference type="GO" id="GO:0071277">
    <property type="term" value="P:cellular response to calcium ion"/>
    <property type="evidence" value="ECO:0000314"/>
    <property type="project" value="UniProtKB"/>
</dbReference>
<dbReference type="GO" id="GO:0048813">
    <property type="term" value="P:dendrite morphogenesis"/>
    <property type="evidence" value="ECO:0000250"/>
    <property type="project" value="UniProtKB"/>
</dbReference>
<dbReference type="GO" id="GO:0006351">
    <property type="term" value="P:DNA-templated transcription"/>
    <property type="evidence" value="ECO:0000314"/>
    <property type="project" value="UniProtKB"/>
</dbReference>
<dbReference type="GO" id="GO:0070375">
    <property type="term" value="P:ERK5 cascade"/>
    <property type="evidence" value="ECO:0000315"/>
    <property type="project" value="UniProtKB"/>
</dbReference>
<dbReference type="GO" id="GO:0007507">
    <property type="term" value="P:heart development"/>
    <property type="evidence" value="ECO:0000270"/>
    <property type="project" value="UniProtKB"/>
</dbReference>
<dbReference type="GO" id="GO:0000165">
    <property type="term" value="P:MAPK cascade"/>
    <property type="evidence" value="ECO:0000314"/>
    <property type="project" value="UniProtKB"/>
</dbReference>
<dbReference type="GO" id="GO:0000002">
    <property type="term" value="P:mitochondrial genome maintenance"/>
    <property type="evidence" value="ECO:0000250"/>
    <property type="project" value="UniProtKB"/>
</dbReference>
<dbReference type="GO" id="GO:0048311">
    <property type="term" value="P:mitochondrion distribution"/>
    <property type="evidence" value="ECO:0000250"/>
    <property type="project" value="UniProtKB"/>
</dbReference>
<dbReference type="GO" id="GO:0007517">
    <property type="term" value="P:muscle organ development"/>
    <property type="evidence" value="ECO:0000303"/>
    <property type="project" value="UniProtKB"/>
</dbReference>
<dbReference type="GO" id="GO:0000122">
    <property type="term" value="P:negative regulation of transcription by RNA polymerase II"/>
    <property type="evidence" value="ECO:0000314"/>
    <property type="project" value="UniProtKB"/>
</dbReference>
<dbReference type="GO" id="GO:0010613">
    <property type="term" value="P:positive regulation of cardiac muscle hypertrophy"/>
    <property type="evidence" value="ECO:0000314"/>
    <property type="project" value="BHF-UCL"/>
</dbReference>
<dbReference type="GO" id="GO:0046326">
    <property type="term" value="P:positive regulation of D-glucose import"/>
    <property type="evidence" value="ECO:0007669"/>
    <property type="project" value="Ensembl"/>
</dbReference>
<dbReference type="GO" id="GO:0010628">
    <property type="term" value="P:positive regulation of gene expression"/>
    <property type="evidence" value="ECO:0007669"/>
    <property type="project" value="Ensembl"/>
</dbReference>
<dbReference type="GO" id="GO:0045944">
    <property type="term" value="P:positive regulation of transcription by RNA polymerase II"/>
    <property type="evidence" value="ECO:0000314"/>
    <property type="project" value="UniProtKB"/>
</dbReference>
<dbReference type="GO" id="GO:0055005">
    <property type="term" value="P:ventricular cardiac myofibril assembly"/>
    <property type="evidence" value="ECO:0000250"/>
    <property type="project" value="UniProtKB"/>
</dbReference>
<dbReference type="CDD" id="cd00265">
    <property type="entry name" value="MADS_MEF2_like"/>
    <property type="match status" value="1"/>
</dbReference>
<dbReference type="DisProt" id="DP01925"/>
<dbReference type="FunFam" id="3.40.1810.10:FF:000001">
    <property type="entry name" value="Myocyte-specific enhancer factor 2A homolog"/>
    <property type="match status" value="1"/>
</dbReference>
<dbReference type="Gene3D" id="3.40.1810.10">
    <property type="entry name" value="Transcription factor, MADS-box"/>
    <property type="match status" value="1"/>
</dbReference>
<dbReference type="IDEAL" id="IID00240"/>
<dbReference type="InterPro" id="IPR022102">
    <property type="entry name" value="HJURP_C"/>
</dbReference>
<dbReference type="InterPro" id="IPR033896">
    <property type="entry name" value="MEF2-like_N"/>
</dbReference>
<dbReference type="InterPro" id="IPR002100">
    <property type="entry name" value="TF_MADSbox"/>
</dbReference>
<dbReference type="InterPro" id="IPR036879">
    <property type="entry name" value="TF_MADSbox_sf"/>
</dbReference>
<dbReference type="PANTHER" id="PTHR11945">
    <property type="entry name" value="MADS BOX PROTEIN"/>
    <property type="match status" value="1"/>
</dbReference>
<dbReference type="PANTHER" id="PTHR11945:SF637">
    <property type="entry name" value="MYOCYTE-SPECIFIC ENHANCER FACTOR 2A"/>
    <property type="match status" value="1"/>
</dbReference>
<dbReference type="Pfam" id="PF12347">
    <property type="entry name" value="HJURP_C"/>
    <property type="match status" value="1"/>
</dbReference>
<dbReference type="Pfam" id="PF00319">
    <property type="entry name" value="SRF-TF"/>
    <property type="match status" value="1"/>
</dbReference>
<dbReference type="PRINTS" id="PR00404">
    <property type="entry name" value="MADSDOMAIN"/>
</dbReference>
<dbReference type="SMART" id="SM00432">
    <property type="entry name" value="MADS"/>
    <property type="match status" value="1"/>
</dbReference>
<dbReference type="SUPFAM" id="SSF55455">
    <property type="entry name" value="SRF-like"/>
    <property type="match status" value="1"/>
</dbReference>
<dbReference type="PROSITE" id="PS00350">
    <property type="entry name" value="MADS_BOX_1"/>
    <property type="match status" value="1"/>
</dbReference>
<dbReference type="PROSITE" id="PS50066">
    <property type="entry name" value="MADS_BOX_2"/>
    <property type="match status" value="1"/>
</dbReference>
<name>MEF2A_HUMAN</name>
<comment type="function">
    <text evidence="12 14 18 21 22 23 27 29">Transcriptional activator which binds specifically to the MEF2 element, 5'-YTA[AT](4)TAR-3', found in numerous muscle-specific genes. Also involved in the activation of numerous growth factor- and stress-induced genes. Mediates cellular functions not only in skeletal and cardiac muscle development, but also in neuronal differentiation and survival. Plays diverse roles in the control of cell growth, survival and apoptosis via p38 MAPK signaling in muscle-specific and/or growth factor-related transcription. In cerebellar granule neurons, phosphorylated and sumoylated MEF2A represses transcription of NUR77 promoting synaptic differentiation. Associates with chromatin to the ZNF16 promoter.</text>
</comment>
<comment type="subunit">
    <text evidence="1 7 8 9 10 15 23 28">Binds DNA as a homo- or heterodimer. Dimerizes with MEF2D. Interacts with HDAC7 (By similarity). Interacts with PIAS1; the interaction enhances sumoylation. Interacts with HDAC4, HDAC9 and SLC2A4RG. Interacts (via the N-terminal) with MAPK7; the interaction results in the phosphorylation and transcriptional activity of MEF2A.</text>
</comment>
<comment type="interaction">
    <interactant intactId="EBI-2656305">
        <id>Q02078</id>
    </interactant>
    <interactant intactId="EBI-1175243">
        <id>Q99697-3</id>
        <label>PITX2</label>
    </interactant>
    <organismsDiffer>false</organismsDiffer>
    <experiments>2</experiments>
</comment>
<comment type="interaction">
    <interactant intactId="EBI-2656305">
        <id>Q02078</id>
    </interactant>
    <interactant intactId="EBI-4405734">
        <id>P10085</id>
        <label>Myod1</label>
    </interactant>
    <organismsDiffer>true</organismsDiffer>
    <experiments>2</experiments>
</comment>
<comment type="interaction">
    <interactant intactId="EBI-2656305">
        <id>Q02078</id>
    </interactant>
    <interactant intactId="EBI-2639084">
        <id>P70257-2</id>
        <label>Nfix</label>
    </interactant>
    <organismsDiffer>true</organismsDiffer>
    <experiments>2</experiments>
</comment>
<comment type="interaction">
    <interactant intactId="EBI-15799584">
        <id>Q02078-1</id>
    </interactant>
    <interactant intactId="EBI-80140">
        <id>P63165</id>
        <label>SUMO1</label>
    </interactant>
    <organismsDiffer>false</organismsDiffer>
    <experiments>3</experiments>
</comment>
<comment type="interaction">
    <interactant intactId="EBI-16431401">
        <id>Q02078-2</id>
    </interactant>
    <interactant intactId="EBI-2864512">
        <id>P50221</id>
        <label>MEOX1</label>
    </interactant>
    <organismsDiffer>false</organismsDiffer>
    <experiments>3</experiments>
</comment>
<comment type="interaction">
    <interactant intactId="EBI-12232917">
        <id>Q02078-5</id>
    </interactant>
    <interactant intactId="EBI-11953488">
        <id>P56524-2</id>
        <label>HDAC4</label>
    </interactant>
    <organismsDiffer>false</organismsDiffer>
    <experiments>3</experiments>
</comment>
<comment type="interaction">
    <interactant intactId="EBI-12232917">
        <id>Q02078-5</id>
    </interactant>
    <interactant intactId="EBI-7116203">
        <id>O75031</id>
        <label>HSF2BP</label>
    </interactant>
    <organismsDiffer>false</organismsDiffer>
    <experiments>3</experiments>
</comment>
<comment type="interaction">
    <interactant intactId="EBI-16437973">
        <id>Q02078-6</id>
    </interactant>
    <interactant intactId="EBI-1213983">
        <id>Q13164</id>
        <label>MAPK7</label>
    </interactant>
    <organismsDiffer>false</organismsDiffer>
    <experiments>3</experiments>
</comment>
<comment type="subcellular location">
    <subcellularLocation>
        <location evidence="5 14 23">Nucleus</location>
    </subcellularLocation>
</comment>
<comment type="alternative products">
    <event type="alternative splicing"/>
    <isoform>
        <id>Q02078-1</id>
        <name>MEF2</name>
        <sequence type="displayed"/>
    </isoform>
    <isoform>
        <id>Q02078-2</id>
        <name>MEFA</name>
        <sequence type="described" ref="VSP_006240"/>
    </isoform>
    <isoform>
        <id>Q02078-3</id>
        <name>RSRFC4</name>
        <sequence type="described" ref="VSP_006241 VSP_006242"/>
    </isoform>
    <isoform>
        <id>Q02078-4</id>
        <name>RSRFC9</name>
        <sequence type="described" ref="VSP_006240 VSP_006241 VSP_006242"/>
    </isoform>
    <isoform>
        <id>Q02078-5</id>
        <name>5</name>
        <sequence type="described" ref="VSP_006241"/>
    </isoform>
    <isoform>
        <id>Q02078-6</id>
        <name>6</name>
        <sequence type="described" ref="VSP_006240 VSP_006241"/>
    </isoform>
    <isoform>
        <id>Q02078-7</id>
        <name>7</name>
        <sequence type="described" ref="VSP_043338 VSP_006240"/>
    </isoform>
    <isoform>
        <id>Q02078-8</id>
        <name>8</name>
        <sequence type="described" ref="VSP_046018 VSP_046019 VSP_006241"/>
    </isoform>
</comment>
<comment type="tissue specificity">
    <text evidence="16 24">Isoform MEF2 and isoform MEFA are expressed only in skeletal and cardiac muscle and in the brain. Isoform RSRFC4 and isoform RSRFC9 are expressed in all tissues examined.</text>
</comment>
<comment type="PTM">
    <text evidence="7 11 13 14 19 21 22 23 25 28 29">Constitutive phosphorylation on Ser-408 promotes Lys-403 sumoylation thus preventing acetylation at this site. Dephosphorylation on Ser-408 by PPP3CA upon neuron depolarization promotes a switch from sumoylation to acetylation on residue Lys-403 leading to inhibition of dendrite claw differentiation. Phosphorylation on Thr-312 and Thr-319 are the main sites involved in p38 MAPK signaling and activate transcription. Phosphorylated on these sites by MAPK14/p38alpha and MAPK11/p38beta, but not by MAPK13/p38delta nor by MAPK12/p38gamma. Phosphorylation on Ser-408 by CDK5 induced by neurotoxicity inhibits MEF2A transcriptional activation leading to apoptosis of cortical neurons. Phosphorylation on Thr-312, Thr-319 and Ser-355 can be induced by EGF.</text>
</comment>
<comment type="PTM">
    <text evidence="1">Sumoylation on Lys-403 is enhanced by PIAS1 and represses transcriptional activity. Phosphorylation on Ser-408 is required for sumoylation. Has no effect on nuclear location nor on DNA binding. Sumoylated with SUMO1 and, to a lesser extent with SUMO2 and SUMO3. PIASx facilitates sumoylation in postsynaptic dendrites in the cerebellar cortex and promotes their morphogenesis (By similarity).</text>
</comment>
<comment type="PTM">
    <text evidence="1">Acetylation on Lys-403 activates transcriptional activity. Acetylated by p300 on several sites in diffentiating myocytes. Acetylation on Lys-4 increases DNA binding and transactivation (By similarity). Hyperacetylation by p300 leads to enhanced cardiac myocyte growth and heart failure.</text>
</comment>
<comment type="PTM">
    <text evidence="12 19">Proteolytically cleaved in cerebellar granule neurons on several sites by caspase 3 and caspase 7 following neurotoxicity. Preferentially cleaves the CDK5-mediated hyperphosphorylated form which leads to neuron apoptosis and transcriptional inactivation.</text>
</comment>
<comment type="disease">
    <disease id="DI-01202">
        <name>Coronary artery disease, autosomal dominant, 1</name>
        <acronym>ADCAD1</acronym>
        <description>A common heart disease characterized by reduced or absent blood flow in one or more of the arteries that encircle and supply the heart. Its most important complication is acute myocardial infarction.</description>
        <dbReference type="MIM" id="608320"/>
    </disease>
    <text>The disease is caused by variants affecting the gene represented in this entry.</text>
</comment>
<comment type="similarity">
    <text evidence="36">Belongs to the MEF2 family.</text>
</comment>
<comment type="sequence caution" evidence="36">
    <conflict type="erroneous initiation">
        <sequence resource="EMBL-CDS" id="AAH53871"/>
    </conflict>
    <text>Truncated N-terminus.</text>
</comment>
<comment type="sequence caution" evidence="36">
    <conflict type="erroneous initiation">
        <sequence resource="EMBL-CDS" id="BAD92222"/>
    </conflict>
    <text>Extended N-terminus.</text>
</comment>
<feature type="chain" id="PRO_0000199428" description="Myocyte-specific enhancer factor 2A">
    <location>
        <begin position="1"/>
        <end position="507"/>
    </location>
</feature>
<feature type="domain" description="MADS-box" evidence="5">
    <location>
        <begin position="3"/>
        <end position="57"/>
    </location>
</feature>
<feature type="DNA-binding region" description="Mef2-type" evidence="4">
    <location>
        <begin position="58"/>
        <end position="86"/>
    </location>
</feature>
<feature type="region of interest" description="Disordered" evidence="6">
    <location>
        <begin position="173"/>
        <end position="229"/>
    </location>
</feature>
<feature type="region of interest" description="Disordered" evidence="6">
    <location>
        <begin position="243"/>
        <end position="270"/>
    </location>
</feature>
<feature type="region of interest" description="Required for interaction with MAPKs">
    <location>
        <begin position="266"/>
        <end position="283"/>
    </location>
</feature>
<feature type="region of interest" description="Beta domain">
    <location>
        <begin position="289"/>
        <end position="296"/>
    </location>
</feature>
<feature type="region of interest" description="Disordered" evidence="6">
    <location>
        <begin position="397"/>
        <end position="507"/>
    </location>
</feature>
<feature type="compositionally biased region" description="Low complexity" evidence="6">
    <location>
        <begin position="173"/>
        <end position="183"/>
    </location>
</feature>
<feature type="compositionally biased region" description="Polar residues" evidence="6">
    <location>
        <begin position="209"/>
        <end position="229"/>
    </location>
</feature>
<feature type="compositionally biased region" description="Low complexity" evidence="6">
    <location>
        <begin position="420"/>
        <end position="429"/>
    </location>
</feature>
<feature type="compositionally biased region" description="Pro residues" evidence="6">
    <location>
        <begin position="430"/>
        <end position="445"/>
    </location>
</feature>
<feature type="compositionally biased region" description="Low complexity" evidence="6">
    <location>
        <begin position="453"/>
        <end position="466"/>
    </location>
</feature>
<feature type="compositionally biased region" description="Basic and acidic residues" evidence="6">
    <location>
        <begin position="467"/>
        <end position="477"/>
    </location>
</feature>
<feature type="compositionally biased region" description="Basic and acidic residues" evidence="6">
    <location>
        <begin position="488"/>
        <end position="507"/>
    </location>
</feature>
<feature type="site" description="Cleavage" evidence="36">
    <location>
        <begin position="176"/>
        <end position="177"/>
    </location>
</feature>
<feature type="site" description="Cleavage" evidence="36">
    <location>
        <begin position="213"/>
        <end position="214"/>
    </location>
</feature>
<feature type="site" description="Cleavage" evidence="36">
    <location>
        <begin position="466"/>
        <end position="467"/>
    </location>
</feature>
<feature type="modified residue" description="Phosphoserine; by CK2" evidence="1">
    <location>
        <position position="59"/>
    </location>
</feature>
<feature type="modified residue" description="Phosphoserine" evidence="37 39">
    <location>
        <position position="98"/>
    </location>
</feature>
<feature type="modified residue" description="Phosphoserine" evidence="37">
    <location>
        <position position="235"/>
    </location>
</feature>
<feature type="modified residue" description="N6-acetyllysine" evidence="38">
    <location>
        <position position="249"/>
    </location>
</feature>
<feature type="modified residue" description="Phosphoserine; by MAPK14" evidence="13 37 39">
    <location>
        <position position="255"/>
    </location>
</feature>
<feature type="modified residue" description="Phosphothreonine; by MAPK7 and MAPK14" evidence="7 11 13 25 29">
    <location>
        <position position="312"/>
    </location>
</feature>
<feature type="modified residue" description="Phosphothreonine; by NLK" evidence="7 11 13 25 29">
    <location>
        <position position="312"/>
    </location>
</feature>
<feature type="modified residue" description="Phosphothreonine; by MAPK7 and MAPK14" evidence="7 11 13 29">
    <location>
        <position position="319"/>
    </location>
</feature>
<feature type="modified residue" description="Phosphoserine; by MAPK7" evidence="11">
    <location>
        <position position="355"/>
    </location>
</feature>
<feature type="modified residue" description="N6-acetyllysine; alternate" evidence="2">
    <location>
        <position position="403"/>
    </location>
</feature>
<feature type="modified residue" description="Phosphoserine; by CDK5" evidence="13 14 21 22">
    <location>
        <position position="408"/>
    </location>
</feature>
<feature type="modified residue" description="Phosphothreonine" evidence="3">
    <location>
        <position position="415"/>
    </location>
</feature>
<feature type="modified residue" description="Phosphoserine; by MAPK" evidence="29">
    <location>
        <position position="453"/>
    </location>
</feature>
<feature type="cross-link" description="Glycyl lysine isopeptide (Lys-Gly) (interchain with G-Cter in SUMO); alternate">
    <location>
        <position position="403"/>
    </location>
</feature>
<feature type="splice variant" id="VSP_043338" description="In isoform 7." evidence="30">
    <location>
        <begin position="19"/>
        <end position="86"/>
    </location>
</feature>
<feature type="splice variant" id="VSP_046018" description="In isoform 8." evidence="32">
    <original>VTFTKRKFGLMKKAYELSVLCDCEIALIIFNSSNKLFQYASTDM</original>
    <variation>TLRKKGLNGCESPDADDYFEHSPLSEDRFSKLNEDSDFIFKRGP</variation>
    <location>
        <begin position="19"/>
        <end position="62"/>
    </location>
</feature>
<feature type="splice variant" id="VSP_046019" description="In isoform 8." evidence="32">
    <location>
        <begin position="63"/>
        <end position="132"/>
    </location>
</feature>
<feature type="splice variant" id="VSP_006240" description="In isoform MEFA, isoform RSRFC9, isoform 6 and isoform 7." evidence="30 31 33 34 35">
    <original>ALNKKEHRGCDSPDPDTSYVLTPHTEEKYKKINEEFDNMMRNHKIA</original>
    <variation>TLRKKGLNGCESPDADDYFEHSPLSEDRFSKLNEDSDFIFKRGP</variation>
    <location>
        <begin position="87"/>
        <end position="132"/>
    </location>
</feature>
<feature type="splice variant" id="VSP_006241" description="In isoform RSRFC4, isoform RSRFC9, isoform 5, isoform 6 and isoform 8." evidence="31 32 33 34 35">
    <location>
        <begin position="289"/>
        <end position="296"/>
    </location>
</feature>
<feature type="splice variant" id="VSP_006242" description="In isoform RSRFC4 and isoform RSRFC9." evidence="31 33 34">
    <location>
        <begin position="420"/>
        <end position="421"/>
    </location>
</feature>
<feature type="sequence variant" id="VAR_038407" description="In dbSNP:rs121918530." evidence="17">
    <original>N</original>
    <variation>S</variation>
    <location>
        <position position="263"/>
    </location>
</feature>
<feature type="sequence variant" id="VAR_038408" description="In dbSNP:rs121918529." evidence="17 20 26">
    <original>P</original>
    <variation>L</variation>
    <location>
        <position position="279"/>
    </location>
</feature>
<feature type="sequence variant" id="VAR_038409" description="In dbSNP:rs121918531." evidence="17">
    <original>G</original>
    <variation>D</variation>
    <location>
        <position position="283"/>
    </location>
</feature>
<feature type="sequence variant" id="VAR_017743" description="Loss of nuclear localization; 66% decrease in transcription activation; loss of synergistic activation by MEF2A and GATA1 through a dominant-negative mechanism.">
    <location>
        <begin position="440"/>
        <end position="446"/>
    </location>
</feature>
<feature type="mutagenesis site" description="Abolishes cleavage at sites 1 and 2 by caspase 3. Increased cleavage at site 3 by caspase 3." evidence="12">
    <original>D</original>
    <variation>A</variation>
    <location>
        <position position="176"/>
    </location>
</feature>
<feature type="mutagenesis site" description="Abolishes cleavage at sites 2 and 3 by caspase 7." evidence="12">
    <original>D</original>
    <variation>A</variation>
    <location>
        <position position="213"/>
    </location>
</feature>
<feature type="mutagenesis site" description="Slightly increased MEF2A protein level." evidence="13">
    <original>S</original>
    <variation>A</variation>
    <location>
        <position position="255"/>
    </location>
</feature>
<feature type="mutagenesis site" description="Decreased MEF2A protein level." evidence="13">
    <original>S</original>
    <variation>D</variation>
    <location>
        <position position="255"/>
    </location>
</feature>
<feature type="mutagenesis site" description="Reduced p38 alpha- and beta2-mediated transcriptional activity; when associated with A-270." evidence="7">
    <original>R</original>
    <variation>A</variation>
    <location>
        <position position="269"/>
    </location>
</feature>
<feature type="mutagenesis site" description="Reduced p38 alpha- and beta2-mediated transcriptional activity; when associated with A-269." evidence="7">
    <original>K</original>
    <variation>A</variation>
    <location>
        <position position="270"/>
    </location>
</feature>
<feature type="mutagenesis site" description="Reduced p38 alpha- and beta2-mediated transcriptional activity; when associated with A-275." evidence="7">
    <original>L</original>
    <variation>A</variation>
    <location>
        <position position="273"/>
    </location>
</feature>
<feature type="mutagenesis site" description="Reduced p38 alpha- and beta2-mediated transcriptional activity; when associated with A-273." evidence="7">
    <original>V</original>
    <variation>A</variation>
    <location>
        <position position="275"/>
    </location>
</feature>
<feature type="mutagenesis site" description="Reduced p38 alpha- and beta2-mediated transcriptional activity; when associated with A-278." evidence="7">
    <original>I</original>
    <variation>A</variation>
    <location>
        <position position="277"/>
    </location>
</feature>
<feature type="mutagenesis site" description="Reduced p38 alpha- and beta2-mediated transcriptional activity; when associated with A-277." evidence="7">
    <original>P</original>
    <variation>A</variation>
    <location>
        <position position="278"/>
    </location>
</feature>
<feature type="mutagenesis site" description="Greatly reduced p38-mediated phosphorylation. Abolishes p38-mediated transcriptional activation; when associated with A-319." evidence="11 29">
    <original>T</original>
    <variation>A</variation>
    <location>
        <position position="312"/>
    </location>
</feature>
<feature type="mutagenesis site" description="Greatly reduced p38-mediated phosphorylation. Abolishes P38-mediated transcriptional activation; when associated with A-312." evidence="11 29">
    <original>T</original>
    <variation>A</variation>
    <location>
        <position position="319"/>
    </location>
</feature>
<feature type="mutagenesis site" description="No effect on p38-mediated transcriptional activity." evidence="11 29">
    <original>S</original>
    <variation>A</variation>
    <location>
        <position position="355"/>
    </location>
</feature>
<feature type="mutagenesis site" description="No effect on p38-mediated phosphorylation.">
    <original>S</original>
    <variation>A</variation>
    <location>
        <position position="387"/>
    </location>
</feature>
<feature type="mutagenesis site" description="Abolishes sumoylation. No change in subcellular location nor in DNA binding. Loss of transcriptional repression." evidence="21 23">
    <original>K</original>
    <variation>R</variation>
    <location>
        <position position="403"/>
    </location>
</feature>
<feature type="mutagenesis site" description="Loss of sumoylation." evidence="14 21">
    <original>S</original>
    <variation>A</variation>
    <location>
        <position position="408"/>
    </location>
</feature>
<feature type="mutagenesis site" description="Rescues sumoylation." evidence="14 21">
    <original>S</original>
    <variation>D</variation>
    <location>
        <position position="408"/>
    </location>
</feature>
<feature type="mutagenesis site" description="No effect on p38-mediated phosphorylation." evidence="29">
    <original>S</original>
    <variation>A</variation>
    <location>
        <position position="453"/>
    </location>
</feature>
<feature type="mutagenesis site" description="No effect on p38-mediated phosphorylation." evidence="29">
    <original>S</original>
    <variation>A</variation>
    <location>
        <position position="479"/>
    </location>
</feature>
<feature type="sequence conflict" description="In Ref. 4; AAB17195/AAB17196." evidence="36" ref="4">
    <location>
        <position position="430"/>
    </location>
</feature>
<feature type="helix" evidence="41">
    <location>
        <begin position="14"/>
        <end position="38"/>
    </location>
</feature>
<feature type="strand" evidence="41">
    <location>
        <begin position="42"/>
        <end position="48"/>
    </location>
</feature>
<feature type="turn" evidence="40">
    <location>
        <begin position="50"/>
        <end position="52"/>
    </location>
</feature>
<feature type="strand" evidence="41">
    <location>
        <begin position="54"/>
        <end position="60"/>
    </location>
</feature>
<feature type="helix" evidence="41">
    <location>
        <begin position="62"/>
        <end position="71"/>
    </location>
</feature>
<feature type="strand" evidence="42">
    <location>
        <begin position="77"/>
        <end position="80"/>
    </location>
</feature>
<feature type="helix" evidence="43">
    <location>
        <begin position="81"/>
        <end position="90"/>
    </location>
</feature>
<feature type="modified residue" description="Phosphoserine" evidence="37">
    <location sequence="Q02078-2">
        <position position="98"/>
    </location>
</feature>
<feature type="modified residue" description="Phosphoserine" evidence="37">
    <location sequence="Q02078-4">
        <position position="98"/>
    </location>
</feature>
<feature type="modified residue" description="Phosphoserine" evidence="37">
    <location sequence="Q02078-6">
        <position position="98"/>
    </location>
</feature>
<feature type="modified residue" description="Phosphoserine" evidence="37">
    <location sequence="Q02078-7">
        <position position="30"/>
    </location>
</feature>
<feature type="modified residue" description="Phosphoserine" evidence="37">
    <location sequence="Q02078-8">
        <position position="30"/>
    </location>
</feature>
<accession>Q02078</accession>
<accession>B4DFQ7</accession>
<accession>F6XG23</accession>
<accession>O43814</accession>
<accession>Q14223</accession>
<accession>Q14224</accession>
<accession>Q59GX4</accession>
<accession>Q7Z6C9</accession>
<accession>Q96D14</accession>